<feature type="initiator methionine" description="Removed">
    <location>
        <position position="1"/>
    </location>
</feature>
<feature type="chain" id="PRO_0000024433" description="Tyrosine-protein kinase HCK">
    <location>
        <begin position="2"/>
        <end position="526"/>
    </location>
</feature>
<feature type="domain" description="SH3" evidence="5">
    <location>
        <begin position="78"/>
        <end position="138"/>
    </location>
</feature>
<feature type="domain" description="SH2" evidence="4">
    <location>
        <begin position="144"/>
        <end position="241"/>
    </location>
</feature>
<feature type="domain" description="Protein kinase" evidence="3">
    <location>
        <begin position="262"/>
        <end position="515"/>
    </location>
</feature>
<feature type="region of interest" description="Disordered" evidence="7">
    <location>
        <begin position="1"/>
        <end position="20"/>
    </location>
</feature>
<feature type="compositionally biased region" description="Basic and acidic residues" evidence="7">
    <location>
        <begin position="11"/>
        <end position="20"/>
    </location>
</feature>
<feature type="active site" description="Proton acceptor">
    <location>
        <position position="381"/>
    </location>
</feature>
<feature type="binding site">
    <location>
        <begin position="268"/>
        <end position="276"/>
    </location>
    <ligand>
        <name>ATP</name>
        <dbReference type="ChEBI" id="CHEBI:30616"/>
    </ligand>
</feature>
<feature type="binding site">
    <location>
        <position position="290"/>
    </location>
    <ligand>
        <name>ATP</name>
        <dbReference type="ChEBI" id="CHEBI:30616"/>
    </ligand>
</feature>
<feature type="modified residue" description="Phosphothreonine" evidence="56">
    <location>
        <position position="36"/>
    </location>
</feature>
<feature type="modified residue" description="Phosphotyrosine; by autocatalysis" evidence="16">
    <location>
        <position position="51"/>
    </location>
</feature>
<feature type="modified residue" description="Phosphothreonine" evidence="55">
    <location>
        <position position="202"/>
    </location>
</feature>
<feature type="modified residue" description="Phosphotyrosine" evidence="2">
    <location>
        <position position="209"/>
    </location>
</feature>
<feature type="modified residue" description="Phosphotyrosine; by autocatalysis" evidence="10 16">
    <location>
        <position position="411"/>
    </location>
</feature>
<feature type="modified residue" description="Phosphoserine" evidence="55">
    <location>
        <position position="462"/>
    </location>
</feature>
<feature type="modified residue" description="Phosphotyrosine" evidence="9 10 16 23 47">
    <location>
        <position position="522"/>
    </location>
</feature>
<feature type="lipid moiety-binding region" description="N-myristoyl glycine" evidence="43">
    <location>
        <position position="2"/>
    </location>
</feature>
<feature type="splice variant" id="VSP_018858" description="In isoform 2 and isoform 3." evidence="51 52 53">
    <location>
        <begin position="1"/>
        <end position="21"/>
    </location>
</feature>
<feature type="splice variant" id="VSP_041926" description="In isoform 3 and isoform 4." evidence="51 52">
    <location>
        <position position="76"/>
    </location>
</feature>
<feature type="sequence variant" id="VAR_041707" description="In dbSNP:rs56029200." evidence="28">
    <original>A</original>
    <variation>T</variation>
    <location>
        <position position="44"/>
    </location>
</feature>
<feature type="sequence variant" id="VAR_041708" description="In dbSNP:rs55722810." evidence="19 28">
    <original>M</original>
    <variation>L</variation>
    <location>
        <position position="105"/>
    </location>
</feature>
<feature type="sequence variant" id="VAR_041709" description="In an ovarian mucinous carcinoma sample; somatic mutation." evidence="28">
    <original>D</original>
    <variation>G</variation>
    <location>
        <position position="399"/>
    </location>
</feature>
<feature type="sequence variant" id="VAR_033836" description="In dbSNP:rs17093828.">
    <original>P</original>
    <variation>Q</variation>
    <location>
        <position position="502"/>
    </location>
</feature>
<feature type="sequence variant" id="VAR_088298" description="In AIPCV; results in increased activation of inflammatory response; decreased protein abundance in patient cells; increased protein degradation; results in increased kinase activity and autophosphorylation." evidence="41">
    <location>
        <begin position="515"/>
        <end position="526"/>
    </location>
</feature>
<feature type="mutagenesis site" description="Slight palmitoylation, cytoplasmic and caveolar localization; in isoform 1;." evidence="17 43">
    <original>G</original>
    <variation>C</variation>
    <location>
        <position position="3"/>
    </location>
</feature>
<feature type="mutagenesis site" description="Abolishes palmitoylation and localization at the cell membrane." evidence="17 43">
    <original>G</original>
    <variation>S</variation>
    <location>
        <position position="3"/>
    </location>
</feature>
<feature type="mutagenesis site" description="Myristoylation and palmitoylation are abolished, leading to entirely cytoplasmic localization; in isoform 2." evidence="43">
    <original>G</original>
    <variation>A</variation>
    <location>
        <position position="23"/>
    </location>
</feature>
<feature type="mutagenesis site" description="Palmitoylation is abolished, some cytoplasmic and no calveolar localization; in isoform 2." evidence="43">
    <original>C</original>
    <variation>S</variation>
    <location>
        <position position="24"/>
    </location>
</feature>
<feature type="mutagenesis site" description="Loss of kinase activity." evidence="16">
    <original>K</original>
    <variation>E</variation>
    <location>
        <position position="290"/>
    </location>
</feature>
<feature type="mutagenesis site" description="Loss of kinase activity." evidence="10">
    <original>E</original>
    <variation>A</variation>
    <location>
        <position position="305"/>
    </location>
</feature>
<feature type="mutagenesis site" description="Loss of kinase activity." evidence="22">
    <original>D</original>
    <variation>E</variation>
    <location>
        <position position="381"/>
    </location>
</feature>
<feature type="mutagenesis site" description="Reduced catalytic activity and higher affinity for target peptides." evidence="10">
    <original>Y</original>
    <variation>A</variation>
    <location>
        <position position="411"/>
    </location>
</feature>
<feature type="mutagenesis site" description="Constitutively activated kinase, leading to cellular transformation." evidence="8 16">
    <original>Y</original>
    <variation>F</variation>
    <location>
        <position position="522"/>
    </location>
</feature>
<feature type="sequence conflict" description="In Ref. 1; AAA52643." evidence="54" ref="1">
    <original>C</original>
    <variation>S</variation>
    <location>
        <position position="24"/>
    </location>
</feature>
<feature type="sequence conflict" description="In Ref. 3; BAF82585." evidence="54" ref="3">
    <original>N</original>
    <variation>D</variation>
    <location>
        <position position="69"/>
    </location>
</feature>
<feature type="sequence conflict" description="In Ref. 3; BAB15482." evidence="54" ref="3">
    <original>W</original>
    <variation>R</variation>
    <location>
        <position position="144"/>
    </location>
</feature>
<feature type="sequence conflict" description="In Ref. 3; BAF82585." evidence="54" ref="3">
    <original>F</original>
    <variation>Y</variation>
    <location>
        <position position="168"/>
    </location>
</feature>
<feature type="sequence conflict" description="In Ref. 6; AAI13855." evidence="54" ref="6">
    <original>I</original>
    <variation>T</variation>
    <location>
        <position position="378"/>
    </location>
</feature>
<feature type="sequence conflict" description="In Ref. 3; BAF82585." evidence="54" ref="3">
    <original>N</original>
    <variation>S</variation>
    <location>
        <position position="488"/>
    </location>
</feature>
<feature type="strand" evidence="65">
    <location>
        <begin position="82"/>
        <end position="85"/>
    </location>
</feature>
<feature type="strand" evidence="65">
    <location>
        <begin position="93"/>
        <end position="96"/>
    </location>
</feature>
<feature type="strand" evidence="66">
    <location>
        <begin position="99"/>
        <end position="102"/>
    </location>
</feature>
<feature type="strand" evidence="65">
    <location>
        <begin position="104"/>
        <end position="111"/>
    </location>
</feature>
<feature type="strand" evidence="65">
    <location>
        <begin position="114"/>
        <end position="122"/>
    </location>
</feature>
<feature type="strand" evidence="65">
    <location>
        <begin position="127"/>
        <end position="129"/>
    </location>
</feature>
<feature type="helix" evidence="65">
    <location>
        <begin position="130"/>
        <end position="132"/>
    </location>
</feature>
<feature type="strand" evidence="65">
    <location>
        <begin position="133"/>
        <end position="135"/>
    </location>
</feature>
<feature type="helix" evidence="60">
    <location>
        <begin position="136"/>
        <end position="138"/>
    </location>
</feature>
<feature type="helix" evidence="65">
    <location>
        <begin position="139"/>
        <end position="141"/>
    </location>
</feature>
<feature type="strand" evidence="61">
    <location>
        <begin position="145"/>
        <end position="148"/>
    </location>
</feature>
<feature type="helix" evidence="65">
    <location>
        <begin position="151"/>
        <end position="159"/>
    </location>
</feature>
<feature type="strand" evidence="65">
    <location>
        <begin position="168"/>
        <end position="172"/>
    </location>
</feature>
<feature type="strand" evidence="65">
    <location>
        <begin position="174"/>
        <end position="176"/>
    </location>
</feature>
<feature type="strand" evidence="65">
    <location>
        <begin position="180"/>
        <end position="188"/>
    </location>
</feature>
<feature type="turn" evidence="65">
    <location>
        <begin position="189"/>
        <end position="191"/>
    </location>
</feature>
<feature type="strand" evidence="65">
    <location>
        <begin position="192"/>
        <end position="202"/>
    </location>
</feature>
<feature type="strand" evidence="64">
    <location>
        <begin position="204"/>
        <end position="206"/>
    </location>
</feature>
<feature type="strand" evidence="65">
    <location>
        <begin position="208"/>
        <end position="211"/>
    </location>
</feature>
<feature type="strand" evidence="65">
    <location>
        <begin position="215"/>
        <end position="218"/>
    </location>
</feature>
<feature type="helix" evidence="65">
    <location>
        <begin position="219"/>
        <end position="228"/>
    </location>
</feature>
<feature type="strand" evidence="65">
    <location>
        <begin position="233"/>
        <end position="235"/>
    </location>
</feature>
<feature type="turn" evidence="59">
    <location>
        <begin position="252"/>
        <end position="255"/>
    </location>
</feature>
<feature type="helix" evidence="65">
    <location>
        <begin position="259"/>
        <end position="261"/>
    </location>
</feature>
<feature type="strand" evidence="65">
    <location>
        <begin position="262"/>
        <end position="270"/>
    </location>
</feature>
<feature type="strand" evidence="65">
    <location>
        <begin position="272"/>
        <end position="281"/>
    </location>
</feature>
<feature type="turn" evidence="65">
    <location>
        <begin position="282"/>
        <end position="284"/>
    </location>
</feature>
<feature type="strand" evidence="65">
    <location>
        <begin position="285"/>
        <end position="292"/>
    </location>
</feature>
<feature type="strand" evidence="62">
    <location>
        <begin position="294"/>
        <end position="297"/>
    </location>
</feature>
<feature type="helix" evidence="65">
    <location>
        <begin position="299"/>
        <end position="309"/>
    </location>
</feature>
<feature type="strand" evidence="65">
    <location>
        <begin position="320"/>
        <end position="324"/>
    </location>
</feature>
<feature type="strand" evidence="65">
    <location>
        <begin position="326"/>
        <end position="328"/>
    </location>
</feature>
<feature type="strand" evidence="65">
    <location>
        <begin position="330"/>
        <end position="333"/>
    </location>
</feature>
<feature type="helix" evidence="65">
    <location>
        <begin position="341"/>
        <end position="345"/>
    </location>
</feature>
<feature type="helix" evidence="65">
    <location>
        <begin position="350"/>
        <end position="352"/>
    </location>
</feature>
<feature type="helix" evidence="65">
    <location>
        <begin position="355"/>
        <end position="374"/>
    </location>
</feature>
<feature type="helix" evidence="65">
    <location>
        <begin position="384"/>
        <end position="386"/>
    </location>
</feature>
<feature type="strand" evidence="65">
    <location>
        <begin position="387"/>
        <end position="389"/>
    </location>
</feature>
<feature type="strand" evidence="65">
    <location>
        <begin position="395"/>
        <end position="397"/>
    </location>
</feature>
<feature type="helix" evidence="65">
    <location>
        <begin position="402"/>
        <end position="405"/>
    </location>
</feature>
<feature type="helix" evidence="65">
    <location>
        <begin position="410"/>
        <end position="413"/>
    </location>
</feature>
<feature type="strand" evidence="58">
    <location>
        <begin position="416"/>
        <end position="419"/>
    </location>
</feature>
<feature type="helix" evidence="65">
    <location>
        <begin position="421"/>
        <end position="423"/>
    </location>
</feature>
<feature type="helix" evidence="65">
    <location>
        <begin position="426"/>
        <end position="431"/>
    </location>
</feature>
<feature type="helix" evidence="65">
    <location>
        <begin position="436"/>
        <end position="451"/>
    </location>
</feature>
<feature type="turn" evidence="67">
    <location>
        <begin position="452"/>
        <end position="454"/>
    </location>
</feature>
<feature type="strand" evidence="57">
    <location>
        <begin position="457"/>
        <end position="460"/>
    </location>
</feature>
<feature type="helix" evidence="65">
    <location>
        <begin position="463"/>
        <end position="471"/>
    </location>
</feature>
<feature type="strand" evidence="63">
    <location>
        <begin position="480"/>
        <end position="482"/>
    </location>
</feature>
<feature type="helix" evidence="65">
    <location>
        <begin position="484"/>
        <end position="493"/>
    </location>
</feature>
<feature type="helix" evidence="65">
    <location>
        <begin position="498"/>
        <end position="500"/>
    </location>
</feature>
<feature type="helix" evidence="65">
    <location>
        <begin position="504"/>
        <end position="512"/>
    </location>
</feature>
<feature type="turn" evidence="65">
    <location>
        <begin position="513"/>
        <end position="518"/>
    </location>
</feature>
<feature type="strand" evidence="67">
    <location>
        <begin position="520"/>
        <end position="522"/>
    </location>
</feature>
<feature type="initiator methionine" description="Removed" evidence="54">
    <location sequence="P08631-2">
        <position position="1"/>
    </location>
</feature>
<feature type="lipid moiety-binding region" description="N-myristoyl glycine" evidence="43">
    <location sequence="P08631-2">
        <position position="2"/>
    </location>
</feature>
<feature type="lipid moiety-binding region" description="S-palmitoyl cysteine" evidence="43">
    <location sequence="P08631-2">
        <position position="3"/>
    </location>
</feature>
<accession>P08631</accession>
<accession>A8K1I1</accession>
<accession>B4DQB6</accession>
<accession>E1P5M2</accession>
<accession>Q29RX1</accession>
<accession>Q2VPE2</accession>
<accession>Q504R5</accession>
<accession>Q5T7K1</accession>
<accession>Q5T7K2</accession>
<accession>Q96CC0</accession>
<accession>Q9H5Y5</accession>
<accession>Q9NUA4</accession>
<accession>Q9UMJ5</accession>
<organism>
    <name type="scientific">Homo sapiens</name>
    <name type="common">Human</name>
    <dbReference type="NCBI Taxonomy" id="9606"/>
    <lineage>
        <taxon>Eukaryota</taxon>
        <taxon>Metazoa</taxon>
        <taxon>Chordata</taxon>
        <taxon>Craniata</taxon>
        <taxon>Vertebrata</taxon>
        <taxon>Euteleostomi</taxon>
        <taxon>Mammalia</taxon>
        <taxon>Eutheria</taxon>
        <taxon>Euarchontoglires</taxon>
        <taxon>Primates</taxon>
        <taxon>Haplorrhini</taxon>
        <taxon>Catarrhini</taxon>
        <taxon>Hominidae</taxon>
        <taxon>Homo</taxon>
    </lineage>
</organism>
<reference key="1">
    <citation type="journal article" date="1987" name="Mol. Cell. Biol.">
        <title>Identification of a human gene (HCK) that encodes a protein-tyrosine kinase and is expressed in hemopoietic cells.</title>
        <authorList>
            <person name="Quintrell N."/>
            <person name="Lebo R."/>
            <person name="Varmus H."/>
            <person name="Bishop J.M."/>
            <person name="Pettenati M.J."/>
            <person name="le Beau M.M."/>
            <person name="Diaz M.O."/>
            <person name="Rowley J.D."/>
        </authorList>
    </citation>
    <scope>NUCLEOTIDE SEQUENCE [MRNA] (ISOFORM 1)</scope>
</reference>
<reference key="2">
    <citation type="journal article" date="1987" name="Mol. Cell. Biol.">
        <title>Novel protein-tyrosine kinase gene (hck) preferentially expressed in cells of hematopoietic origin.</title>
        <authorList>
            <person name="Ziegler S.F."/>
            <person name="Marth J.D."/>
            <person name="Lewis D.B."/>
            <person name="Perlmutter R.M."/>
        </authorList>
    </citation>
    <scope>NUCLEOTIDE SEQUENCE [MRNA] (ISOFORM 2)</scope>
    <scope>TISSUE SPECIFICITY</scope>
</reference>
<reference key="3">
    <citation type="journal article" date="2004" name="Nat. Genet.">
        <title>Complete sequencing and characterization of 21,243 full-length human cDNAs.</title>
        <authorList>
            <person name="Ota T."/>
            <person name="Suzuki Y."/>
            <person name="Nishikawa T."/>
            <person name="Otsuki T."/>
            <person name="Sugiyama T."/>
            <person name="Irie R."/>
            <person name="Wakamatsu A."/>
            <person name="Hayashi K."/>
            <person name="Sato H."/>
            <person name="Nagai K."/>
            <person name="Kimura K."/>
            <person name="Makita H."/>
            <person name="Sekine M."/>
            <person name="Obayashi M."/>
            <person name="Nishi T."/>
            <person name="Shibahara T."/>
            <person name="Tanaka T."/>
            <person name="Ishii S."/>
            <person name="Yamamoto J."/>
            <person name="Saito K."/>
            <person name="Kawai Y."/>
            <person name="Isono Y."/>
            <person name="Nakamura Y."/>
            <person name="Nagahari K."/>
            <person name="Murakami K."/>
            <person name="Yasuda T."/>
            <person name="Iwayanagi T."/>
            <person name="Wagatsuma M."/>
            <person name="Shiratori A."/>
            <person name="Sudo H."/>
            <person name="Hosoiri T."/>
            <person name="Kaku Y."/>
            <person name="Kodaira H."/>
            <person name="Kondo H."/>
            <person name="Sugawara M."/>
            <person name="Takahashi M."/>
            <person name="Kanda K."/>
            <person name="Yokoi T."/>
            <person name="Furuya T."/>
            <person name="Kikkawa E."/>
            <person name="Omura Y."/>
            <person name="Abe K."/>
            <person name="Kamihara K."/>
            <person name="Katsuta N."/>
            <person name="Sato K."/>
            <person name="Tanikawa M."/>
            <person name="Yamazaki M."/>
            <person name="Ninomiya K."/>
            <person name="Ishibashi T."/>
            <person name="Yamashita H."/>
            <person name="Murakawa K."/>
            <person name="Fujimori K."/>
            <person name="Tanai H."/>
            <person name="Kimata M."/>
            <person name="Watanabe M."/>
            <person name="Hiraoka S."/>
            <person name="Chiba Y."/>
            <person name="Ishida S."/>
            <person name="Ono Y."/>
            <person name="Takiguchi S."/>
            <person name="Watanabe S."/>
            <person name="Yosida M."/>
            <person name="Hotuta T."/>
            <person name="Kusano J."/>
            <person name="Kanehori K."/>
            <person name="Takahashi-Fujii A."/>
            <person name="Hara H."/>
            <person name="Tanase T.-O."/>
            <person name="Nomura Y."/>
            <person name="Togiya S."/>
            <person name="Komai F."/>
            <person name="Hara R."/>
            <person name="Takeuchi K."/>
            <person name="Arita M."/>
            <person name="Imose N."/>
            <person name="Musashino K."/>
            <person name="Yuuki H."/>
            <person name="Oshima A."/>
            <person name="Sasaki N."/>
            <person name="Aotsuka S."/>
            <person name="Yoshikawa Y."/>
            <person name="Matsunawa H."/>
            <person name="Ichihara T."/>
            <person name="Shiohata N."/>
            <person name="Sano S."/>
            <person name="Moriya S."/>
            <person name="Momiyama H."/>
            <person name="Satoh N."/>
            <person name="Takami S."/>
            <person name="Terashima Y."/>
            <person name="Suzuki O."/>
            <person name="Nakagawa S."/>
            <person name="Senoh A."/>
            <person name="Mizoguchi H."/>
            <person name="Goto Y."/>
            <person name="Shimizu F."/>
            <person name="Wakebe H."/>
            <person name="Hishigaki H."/>
            <person name="Watanabe T."/>
            <person name="Sugiyama A."/>
            <person name="Takemoto M."/>
            <person name="Kawakami B."/>
            <person name="Yamazaki M."/>
            <person name="Watanabe K."/>
            <person name="Kumagai A."/>
            <person name="Itakura S."/>
            <person name="Fukuzumi Y."/>
            <person name="Fujimori Y."/>
            <person name="Komiyama M."/>
            <person name="Tashiro H."/>
            <person name="Tanigami A."/>
            <person name="Fujiwara T."/>
            <person name="Ono T."/>
            <person name="Yamada K."/>
            <person name="Fujii Y."/>
            <person name="Ozaki K."/>
            <person name="Hirao M."/>
            <person name="Ohmori Y."/>
            <person name="Kawabata A."/>
            <person name="Hikiji T."/>
            <person name="Kobatake N."/>
            <person name="Inagaki H."/>
            <person name="Ikema Y."/>
            <person name="Okamoto S."/>
            <person name="Okitani R."/>
            <person name="Kawakami T."/>
            <person name="Noguchi S."/>
            <person name="Itoh T."/>
            <person name="Shigeta K."/>
            <person name="Senba T."/>
            <person name="Matsumura K."/>
            <person name="Nakajima Y."/>
            <person name="Mizuno T."/>
            <person name="Morinaga M."/>
            <person name="Sasaki M."/>
            <person name="Togashi T."/>
            <person name="Oyama M."/>
            <person name="Hata H."/>
            <person name="Watanabe M."/>
            <person name="Komatsu T."/>
            <person name="Mizushima-Sugano J."/>
            <person name="Satoh T."/>
            <person name="Shirai Y."/>
            <person name="Takahashi Y."/>
            <person name="Nakagawa K."/>
            <person name="Okumura K."/>
            <person name="Nagase T."/>
            <person name="Nomura N."/>
            <person name="Kikuchi H."/>
            <person name="Masuho Y."/>
            <person name="Yamashita R."/>
            <person name="Nakai K."/>
            <person name="Yada T."/>
            <person name="Nakamura Y."/>
            <person name="Ohara O."/>
            <person name="Isogai T."/>
            <person name="Sugano S."/>
        </authorList>
    </citation>
    <scope>NUCLEOTIDE SEQUENCE [LARGE SCALE MRNA] (ISOFORMS 2 AND 4)</scope>
    <scope>VARIANT LEU-105</scope>
    <source>
        <tissue>Corpus callosum</tissue>
        <tissue>Ileal mucosa</tissue>
    </source>
</reference>
<reference key="4">
    <citation type="journal article" date="2001" name="Nature">
        <title>The DNA sequence and comparative analysis of human chromosome 20.</title>
        <authorList>
            <person name="Deloukas P."/>
            <person name="Matthews L.H."/>
            <person name="Ashurst J.L."/>
            <person name="Burton J."/>
            <person name="Gilbert J.G.R."/>
            <person name="Jones M."/>
            <person name="Stavrides G."/>
            <person name="Almeida J.P."/>
            <person name="Babbage A.K."/>
            <person name="Bagguley C.L."/>
            <person name="Bailey J."/>
            <person name="Barlow K.F."/>
            <person name="Bates K.N."/>
            <person name="Beard L.M."/>
            <person name="Beare D.M."/>
            <person name="Beasley O.P."/>
            <person name="Bird C.P."/>
            <person name="Blakey S.E."/>
            <person name="Bridgeman A.M."/>
            <person name="Brown A.J."/>
            <person name="Buck D."/>
            <person name="Burrill W.D."/>
            <person name="Butler A.P."/>
            <person name="Carder C."/>
            <person name="Carter N.P."/>
            <person name="Chapman J.C."/>
            <person name="Clamp M."/>
            <person name="Clark G."/>
            <person name="Clark L.N."/>
            <person name="Clark S.Y."/>
            <person name="Clee C.M."/>
            <person name="Clegg S."/>
            <person name="Cobley V.E."/>
            <person name="Collier R.E."/>
            <person name="Connor R.E."/>
            <person name="Corby N.R."/>
            <person name="Coulson A."/>
            <person name="Coville G.J."/>
            <person name="Deadman R."/>
            <person name="Dhami P.D."/>
            <person name="Dunn M."/>
            <person name="Ellington A.G."/>
            <person name="Frankland J.A."/>
            <person name="Fraser A."/>
            <person name="French L."/>
            <person name="Garner P."/>
            <person name="Grafham D.V."/>
            <person name="Griffiths C."/>
            <person name="Griffiths M.N.D."/>
            <person name="Gwilliam R."/>
            <person name="Hall R.E."/>
            <person name="Hammond S."/>
            <person name="Harley J.L."/>
            <person name="Heath P.D."/>
            <person name="Ho S."/>
            <person name="Holden J.L."/>
            <person name="Howden P.J."/>
            <person name="Huckle E."/>
            <person name="Hunt A.R."/>
            <person name="Hunt S.E."/>
            <person name="Jekosch K."/>
            <person name="Johnson C.M."/>
            <person name="Johnson D."/>
            <person name="Kay M.P."/>
            <person name="Kimberley A.M."/>
            <person name="King A."/>
            <person name="Knights A."/>
            <person name="Laird G.K."/>
            <person name="Lawlor S."/>
            <person name="Lehvaeslaiho M.H."/>
            <person name="Leversha M.A."/>
            <person name="Lloyd C."/>
            <person name="Lloyd D.M."/>
            <person name="Lovell J.D."/>
            <person name="Marsh V.L."/>
            <person name="Martin S.L."/>
            <person name="McConnachie L.J."/>
            <person name="McLay K."/>
            <person name="McMurray A.A."/>
            <person name="Milne S.A."/>
            <person name="Mistry D."/>
            <person name="Moore M.J.F."/>
            <person name="Mullikin J.C."/>
            <person name="Nickerson T."/>
            <person name="Oliver K."/>
            <person name="Parker A."/>
            <person name="Patel R."/>
            <person name="Pearce T.A.V."/>
            <person name="Peck A.I."/>
            <person name="Phillimore B.J.C.T."/>
            <person name="Prathalingam S.R."/>
            <person name="Plumb R.W."/>
            <person name="Ramsay H."/>
            <person name="Rice C.M."/>
            <person name="Ross M.T."/>
            <person name="Scott C.E."/>
            <person name="Sehra H.K."/>
            <person name="Shownkeen R."/>
            <person name="Sims S."/>
            <person name="Skuce C.D."/>
            <person name="Smith M.L."/>
            <person name="Soderlund C."/>
            <person name="Steward C.A."/>
            <person name="Sulston J.E."/>
            <person name="Swann R.M."/>
            <person name="Sycamore N."/>
            <person name="Taylor R."/>
            <person name="Tee L."/>
            <person name="Thomas D.W."/>
            <person name="Thorpe A."/>
            <person name="Tracey A."/>
            <person name="Tromans A.C."/>
            <person name="Vaudin M."/>
            <person name="Wall M."/>
            <person name="Wallis J.M."/>
            <person name="Whitehead S.L."/>
            <person name="Whittaker P."/>
            <person name="Willey D.L."/>
            <person name="Williams L."/>
            <person name="Williams S.A."/>
            <person name="Wilming L."/>
            <person name="Wray P.W."/>
            <person name="Hubbard T."/>
            <person name="Durbin R.M."/>
            <person name="Bentley D.R."/>
            <person name="Beck S."/>
            <person name="Rogers J."/>
        </authorList>
    </citation>
    <scope>NUCLEOTIDE SEQUENCE [LARGE SCALE GENOMIC DNA]</scope>
</reference>
<reference key="5">
    <citation type="submission" date="2005-09" db="EMBL/GenBank/DDBJ databases">
        <authorList>
            <person name="Mural R.J."/>
            <person name="Istrail S."/>
            <person name="Sutton G.G."/>
            <person name="Florea L."/>
            <person name="Halpern A.L."/>
            <person name="Mobarry C.M."/>
            <person name="Lippert R."/>
            <person name="Walenz B."/>
            <person name="Shatkay H."/>
            <person name="Dew I."/>
            <person name="Miller J.R."/>
            <person name="Flanigan M.J."/>
            <person name="Edwards N.J."/>
            <person name="Bolanos R."/>
            <person name="Fasulo D."/>
            <person name="Halldorsson B.V."/>
            <person name="Hannenhalli S."/>
            <person name="Turner R."/>
            <person name="Yooseph S."/>
            <person name="Lu F."/>
            <person name="Nusskern D.R."/>
            <person name="Shue B.C."/>
            <person name="Zheng X.H."/>
            <person name="Zhong F."/>
            <person name="Delcher A.L."/>
            <person name="Huson D.H."/>
            <person name="Kravitz S.A."/>
            <person name="Mouchard L."/>
            <person name="Reinert K."/>
            <person name="Remington K.A."/>
            <person name="Clark A.G."/>
            <person name="Waterman M.S."/>
            <person name="Eichler E.E."/>
            <person name="Adams M.D."/>
            <person name="Hunkapiller M.W."/>
            <person name="Myers E.W."/>
            <person name="Venter J.C."/>
        </authorList>
    </citation>
    <scope>NUCLEOTIDE SEQUENCE [LARGE SCALE GENOMIC DNA]</scope>
</reference>
<reference key="6">
    <citation type="journal article" date="2004" name="Genome Res.">
        <title>The status, quality, and expansion of the NIH full-length cDNA project: the Mammalian Gene Collection (MGC).</title>
        <authorList>
            <consortium name="The MGC Project Team"/>
        </authorList>
    </citation>
    <scope>NUCLEOTIDE SEQUENCE [LARGE SCALE MRNA] (ISOFORMS 1 AND 3)</scope>
    <source>
        <tissue>B-cell</tissue>
        <tissue>Lymph</tissue>
    </source>
</reference>
<reference key="7">
    <citation type="journal article" date="1991" name="Mol. Cell. Biol.">
        <title>Two isoforms of murine hck, generated by utilization of alternative translational initiation codons, exhibit different patterns of subcellular localization.</title>
        <authorList>
            <person name="Lock P."/>
            <person name="Ralph S."/>
            <person name="Stanley E."/>
            <person name="Boulet I."/>
            <person name="Ramsay R."/>
            <person name="Dunn A.R."/>
        </authorList>
    </citation>
    <scope>NUCLEOTIDE SEQUENCE [MRNA] OF 1-21 (ISOFORM 1)</scope>
    <scope>ALTERNATIVE INITIATION</scope>
    <source>
        <tissue>Bone marrow</tissue>
    </source>
</reference>
<reference key="8">
    <citation type="journal article" date="1992" name="Gene">
        <title>The genomic locus of the human hemopoietic-specific cell protein tyrosine kinase (PTK)-encoding gene (HCK) confirms conservation of exon-intron structure among human PTKs of the src family.</title>
        <authorList>
            <person name="Hradetzky D."/>
            <person name="Strebhardt K."/>
            <person name="Ruesamen-Waigmann H."/>
        </authorList>
    </citation>
    <scope>NUCLEOTIDE SEQUENCE [GENOMIC DNA] OF 178-526</scope>
    <source>
        <tissue>Spleen</tissue>
    </source>
</reference>
<reference key="9">
    <citation type="journal article" date="1994" name="J. Biol. Chem.">
        <title>Physical and functional association of Src-related protein tyrosine kinases with Fc gamma RII in monocytic THP-1 cells.</title>
        <authorList>
            <person name="Ghazizadeh S."/>
            <person name="Bolen J.B."/>
            <person name="Fleit H.B."/>
        </authorList>
    </citation>
    <scope>INTERACTION WITH FCGR2A</scope>
    <scope>CATALYTIC ACTIVITY</scope>
    <scope>FUNCTION IN PHOSPHORYLATION OF FCGR2A</scope>
</reference>
<reference key="10">
    <citation type="journal article" date="1994" name="J. Exp. Med.">
        <title>Physical and functional association of the high affinity immunoglobulin G receptor (Fc gamma RI) with the kinases Hck and Lyn.</title>
        <authorList>
            <person name="Wang A.V."/>
            <person name="Scholl P.R."/>
            <person name="Geha R.S."/>
        </authorList>
    </citation>
    <scope>INTERACTION WITH FCGR1A</scope>
    <scope>CATALYTIC ACTIVITY</scope>
    <scope>TISSUE SPECIFICITY</scope>
    <scope>PHOSPHORYLATION</scope>
</reference>
<reference key="11">
    <citation type="journal article" date="1995" name="J. Immunol.">
        <title>The Fc gamma RI receptor signals through the activation of hck and MAP kinase.</title>
        <authorList>
            <person name="Durden D.L."/>
            <person name="Kim H.M."/>
            <person name="Calore B."/>
            <person name="Liu Y."/>
        </authorList>
    </citation>
    <scope>FUNCTION IN FCGR1A SIGNALING</scope>
    <scope>CATALYTIC ACTIVITY</scope>
    <scope>AUTOPHOSPHORYLATION</scope>
    <scope>ACTIVITY REGULATION</scope>
</reference>
<reference key="12">
    <citation type="journal article" date="1995" name="Mol. Cell. Biol.">
        <title>Myristoylation and differential palmitoylation of the HCK protein-tyrosine kinases govern their attachment to membranes and association with caveolae.</title>
        <authorList>
            <person name="Robbins S.M."/>
            <person name="Quintrell N.A."/>
            <person name="Bishop J.M."/>
        </authorList>
    </citation>
    <scope>SUBCELLULAR LOCATION</scope>
    <scope>ALTERNATIVE INITIATION</scope>
    <scope>MYRISTOYLATION AT GLY-2</scope>
    <scope>MYRISTOYLATION AT GLY-2 (ISOFORM 2)</scope>
    <scope>PALMITOYLATION AT CYS-3 (ISOFORM 2)</scope>
    <scope>MUTAGENESIS OF GLY-3; GLY-23 AND CYS-24</scope>
</reference>
<reference key="13">
    <citation type="journal article" date="1997" name="Exp. Hematol.">
        <title>Signal transduction of interleukin-6 involves tyrosine phosphorylation of multiple cytosolic proteins and activation of Src-family kinases Fyn, Hck, and Lyn in multiple myeloma cell lines.</title>
        <authorList>
            <person name="Hallek M."/>
            <person name="Neumann C."/>
            <person name="Schaffer M."/>
            <person name="Danhauser-Riedl S."/>
            <person name="von Bubnoff N."/>
            <person name="de Vos G."/>
            <person name="Druker B.J."/>
            <person name="Yasukawa K."/>
            <person name="Griffin J.D."/>
            <person name="Emmerich B."/>
        </authorList>
    </citation>
    <scope>FUNCTION</scope>
    <scope>ACTIVITY REGULATION</scope>
    <scope>PHOSPHORYLATION</scope>
    <scope>INTERACTION WITH IL6ST</scope>
</reference>
<reference key="14">
    <citation type="journal article" date="1997" name="J. Biol. Chem.">
        <title>Hck is activated by opsonized zymosan and A23187 in distinct subcellular fractions of human granulocytes.</title>
        <authorList>
            <person name="Welch H."/>
            <person name="Maridonneau-Parini I."/>
        </authorList>
    </citation>
    <scope>INDUCTION</scope>
    <scope>SUBCELLULAR LOCATION</scope>
    <scope>CATALYTIC ACTIVITY</scope>
    <scope>TISSUE SPECIFICITY</scope>
</reference>
<reference key="15">
    <citation type="journal article" date="1997" name="J. Biol. Chem.">
        <title>SH3-mediated Hck tyrosine kinase activation and fibroblast transformation by the Nef protein of HIV-1.</title>
        <authorList>
            <person name="Briggs S.D."/>
            <person name="Sharkey M."/>
            <person name="Stevenson M."/>
            <person name="Smithgall T.E."/>
        </authorList>
    </citation>
    <scope>ACTIVITY REGULATION</scope>
    <scope>INTERACTION WITH HIV-1 NEF (MICROBIAL INFECTION)</scope>
</reference>
<reference key="16">
    <citation type="journal article" date="1997" name="J. Biol. Chem.">
        <title>The Src family kinase Hck interacts with Bcr-Abl by a kinase-independent mechanism and phosphorylates the Grb2-binding site of Bcr.</title>
        <authorList>
            <person name="Warmuth M."/>
            <person name="Bergmann M."/>
            <person name="Priess A."/>
            <person name="Hauslmann K."/>
            <person name="Emmerich B."/>
            <person name="Hallek M."/>
        </authorList>
    </citation>
    <scope>FUNCTION IN PHOSPHORYLATION OF BCR</scope>
    <scope>INTERACTION WITH BCR-ABL</scope>
</reference>
<reference key="17">
    <citation type="journal article" date="1999" name="Biochem. Biophys. Res. Commun.">
        <title>The proto-oncogene p120(Cbl) is a downstream substrate of the Hck protein-tyrosine kinase.</title>
        <authorList>
            <person name="Howlett C.J."/>
            <person name="Bisson S.A."/>
            <person name="Resek M.E."/>
            <person name="Tigley A.W."/>
            <person name="Robbins S.M."/>
        </authorList>
    </citation>
    <scope>FUNCTION IN CBL PHOSPHORYLATION; CELL PROLIFERATION AND REGULATION OF CELL SHAPE</scope>
    <scope>CATALYTIC ACTIVITY</scope>
    <scope>AUTOPHOSPHORYLATION</scope>
    <scope>MUTAGENESIS OF TYR-522</scope>
    <scope>INTERACTION WITH CBL</scope>
</reference>
<reference key="18">
    <citation type="journal article" date="2000" name="J. Immunol.">
        <title>IL-2 signaling in human monocytes involves the phosphorylation and activation of p59hck.</title>
        <authorList>
            <person name="Bosco M.C."/>
            <person name="Curiel R.E."/>
            <person name="Zea A.H."/>
            <person name="Malabarba M.G."/>
            <person name="Ortaldo J.R."/>
            <person name="Espinoza-Delgado I."/>
        </authorList>
    </citation>
    <scope>FUNCTION IN IL2 SIGNALING</scope>
    <scope>CATALYTIC ACTIVITY</scope>
    <scope>INDUCTION</scope>
    <scope>ACTIVITY REGULATION</scope>
    <scope>PHOSPHORYLATION</scope>
</reference>
<reference key="19">
    <citation type="journal article" date="2000" name="J. Biol. Chem.">
        <title>Reciprocal regulation of Hck activity by phosphorylation of Tyr(527) and Tyr(416). Effect of introducing a high affinity intramolecular SH2 ligand.</title>
        <authorList>
            <person name="Porter M."/>
            <person name="Schindler T."/>
            <person name="Kuriyan J."/>
            <person name="Miller W.T."/>
        </authorList>
    </citation>
    <scope>PHOSPHORYLATION AT TYR-411 AND TYR-522</scope>
    <scope>IDENTIFICATION BY MASS SPECTROMETRY</scope>
    <scope>ACTIVITY REGULATION</scope>
    <scope>MUTAGENESIS OF GLU-305 AND TYR-411</scope>
</reference>
<reference key="20">
    <citation type="journal article" date="2000" name="Nat. Immunol.">
        <title>Regulation of tyrosine kinase activation and granule release through beta-arrestin by CXCRI.</title>
        <authorList>
            <person name="Barlic J."/>
            <person name="Andrews J.D."/>
            <person name="Kelvin A.A."/>
            <person name="Bosinger S.E."/>
            <person name="DeVries M.E."/>
            <person name="Xu L."/>
            <person name="Dobransky T."/>
            <person name="Feldman R.D."/>
            <person name="Ferguson S.S."/>
            <person name="Kelvin D.J."/>
        </authorList>
    </citation>
    <scope>FUNCTION IN IL8-MEDIATED DEGRANULATION</scope>
    <scope>ACTIVITY REGULATION</scope>
    <scope>INTERACTION WITH ARRB1 AND ARRB2</scope>
</reference>
<reference key="21">
    <citation type="journal article" date="2001" name="J. Biol. Chem.">
        <title>The tyrosine kinase Hck is an inhibitor of HIV-1 replication counteracted by the viral vif protein.</title>
        <authorList>
            <person name="Hassaine G."/>
            <person name="Courcoul M."/>
            <person name="Bessou G."/>
            <person name="Barthalay Y."/>
            <person name="Picard C."/>
            <person name="Olive D."/>
            <person name="Collette Y."/>
            <person name="Vigne R."/>
            <person name="Decroly E."/>
        </authorList>
    </citation>
    <scope>INTERACTION WITH HIV-1 VIF (MICROBIAL INFECTION)</scope>
</reference>
<reference key="22">
    <citation type="journal article" date="2001" name="J. Biol. Chem.">
        <title>The ORF3 protein of hepatitis E virus binds to Src homology 3 domains and activates MAPK.</title>
        <authorList>
            <person name="Korkaya H."/>
            <person name="Jameel S."/>
            <person name="Gupta D."/>
            <person name="Tyagi S."/>
            <person name="Kumar R."/>
            <person name="Zafrullah M."/>
            <person name="Mazumdar M."/>
            <person name="Lal S.K."/>
            <person name="Xiaofang L."/>
            <person name="Sehgal D."/>
            <person name="Das S.R."/>
            <person name="Sahal D."/>
        </authorList>
    </citation>
    <scope>INTERACTION WITH HEV ORF3 PROTEIN (MICROBIAL INFECTION)</scope>
</reference>
<reference key="23">
    <citation type="journal article" date="2002" name="EMBO J.">
        <title>The Src family kinase Hck couples BCR/ABL to STAT5 activation in myeloid leukemia cells.</title>
        <authorList>
            <person name="Klejman A."/>
            <person name="Schreiner S.J."/>
            <person name="Nieborowska-Skorska M."/>
            <person name="Slupianek A."/>
            <person name="Wilson M."/>
            <person name="Smithgall T.E."/>
            <person name="Skorski T."/>
        </authorList>
    </citation>
    <scope>FUNCTION AS EFFECTOR OF THE BCR-ABL FUSION PROTEIN IN PHOSPHORYLATION OF STAT5B</scope>
    <scope>INTERACTION WITH STAT5B AND THE BCR-ABL FUSION PROTEIN</scope>
    <scope>PHOSPHORYLATION</scope>
</reference>
<reference key="24">
    <citation type="journal article" date="2002" name="J. Biol. Chem.">
        <title>Phosphorylation-dependent interactions between ADAM15 cytoplasmic domain and Src family protein-tyrosine kinases.</title>
        <authorList>
            <person name="Poghosyan Z."/>
            <person name="Robbins S.M."/>
            <person name="Houslay M.D."/>
            <person name="Webster A."/>
            <person name="Murphy G."/>
            <person name="Edwards D.R."/>
        </authorList>
    </citation>
    <scope>INTERACTION WITH ADAM15</scope>
    <scope>FUNCTION IN PHOSPHORYLATION OF ADAM15</scope>
</reference>
<reference key="25">
    <citation type="journal article" date="2002" name="J. Biol. Chem.">
        <title>p59Hck isoform induces F-actin reorganization to form protrusions of the plasma membrane in a Cdc42- and Rac-dependent manner.</title>
        <authorList>
            <person name="Carreno S."/>
            <person name="Caron E."/>
            <person name="Cougoule C."/>
            <person name="Emorine L.J."/>
            <person name="Maridonneau-Parini I."/>
        </authorList>
    </citation>
    <scope>FUNCTION IN REORGANIZATION OF THE ACTIN CYTOSKELETON; FORMATION OF CELL PROTRUSIONS AND PHAGOCYTOSIS (ISOFORM 2)</scope>
    <scope>SUBCELLULAR LOCATION (ISOFORM 2)</scope>
    <scope>MUTAGENESIS OF GLY-3</scope>
</reference>
<reference key="26">
    <citation type="journal article" date="2002" name="Oncogene">
        <title>Membrane-anchored Cbl suppresses Hck protein-tyrosine kinase mediated cellular transformation.</title>
        <authorList>
            <person name="Howlett C.J."/>
            <person name="Robbins S.M."/>
        </authorList>
    </citation>
    <scope>FUNCTION IN CELL PROLIFERATION</scope>
    <scope>UBIQUITINATION</scope>
    <scope>PHOSPHORYLATION AT TYR-51; TYR-411 AND TYR-522</scope>
    <scope>SUBCELLULAR LOCATION</scope>
    <scope>INTERACTION WITH CBL (ISOFORM 2)</scope>
    <scope>MUTAGENESIS OF LYS-290 AND TYR-522</scope>
</reference>
<reference key="27">
    <citation type="journal article" date="2004" name="J. Biol. Chem.">
        <title>Critical role for hematopoietic cell kinase (Hck)-mediated phosphorylation of Gab1 and Gab2 docking proteins in interleukin 6-induced proliferation and survival of multiple myeloma cells.</title>
        <authorList>
            <person name="Podar K."/>
            <person name="Mostoslavsky G."/>
            <person name="Sattler M."/>
            <person name="Tai Y.T."/>
            <person name="Hayashi T."/>
            <person name="Catley L.P."/>
            <person name="Hideshima T."/>
            <person name="Mulligan R.C."/>
            <person name="Chauhan D."/>
            <person name="Anderson K.C."/>
        </authorList>
    </citation>
    <scope>FUNCTION IN IL6 SIGNALING CASCADE AND IN PHOSPHORYLATION OF GAB1 AND GAB2</scope>
</reference>
<reference key="28">
    <citation type="journal article" date="2005" name="Biochemistry">
        <title>Identification of tyrosine residues on ELMO1 that are phosphorylated by the Src-family kinase Hck.</title>
        <authorList>
            <person name="Yokoyama N."/>
            <person name="deBakker C.D."/>
            <person name="Zappacosta F."/>
            <person name="Huddleston M.J."/>
            <person name="Annan R.S."/>
            <person name="Ravichandran K.S."/>
            <person name="Miller W.T."/>
        </authorList>
    </citation>
    <scope>FUNCTION IN PHOSPHORYLATION OF ELMO1</scope>
    <scope>INTERACTION WITH ELMO1</scope>
</reference>
<reference key="29">
    <citation type="journal article" date="2005" name="Traffic">
        <title>Activation of the lysosome-associated p61Hck isoform triggers the biogenesis of podosomes.</title>
        <authorList>
            <person name="Cougoule C."/>
            <person name="Carreno S."/>
            <person name="Castandet J."/>
            <person name="Labrousse A."/>
            <person name="Astarie-Dequeker C."/>
            <person name="Poincloux R."/>
            <person name="Le Cabec V."/>
            <person name="Maridonneau-Parini I."/>
        </authorList>
    </citation>
    <scope>FUNCTION</scope>
    <scope>CATALYTIC ACTIVITY</scope>
    <scope>SUBCELLULAR LOCATION</scope>
    <scope>MUTAGENESIS OF ASP-381</scope>
</reference>
<reference key="30">
    <citation type="journal article" date="2006" name="J. Biol. Chem.">
        <title>HIV-1 Nef selectively activates Src family kinases Hck, Lyn, and c-Src through direct SH3 domain interaction.</title>
        <authorList>
            <person name="Trible R.P."/>
            <person name="Emert-Sedlak L."/>
            <person name="Smithgall T.E."/>
        </authorList>
    </citation>
    <scope>INTERACTION WITH HIV-1 NEF (MICROBIAL INFECTION)</scope>
    <scope>ACTIVITY REGULATION</scope>
</reference>
<reference key="31">
    <citation type="journal article" date="2007" name="BMC Mol. Biol.">
        <title>Regulation of p73 by Hck through kinase-dependent and independent mechanisms.</title>
        <authorList>
            <person name="Paliwal P."/>
            <person name="Radha V."/>
            <person name="Swarup G."/>
        </authorList>
    </citation>
    <scope>FUNCTION IN PHOSPHORYLATION AND INHIBITION OF TP73 ACTIVITY</scope>
    <scope>SUBCELLULAR LOCATION</scope>
    <scope>INTERACTION WITH TP73 AND YAP1</scope>
</reference>
<reference key="32">
    <citation type="journal article" date="2007" name="Oncogene">
        <title>Inhibition of IL-6-dependent growth of myeloma cells by an acidic peptide repressing the gp130-mediated activation of Src family kinases.</title>
        <authorList>
            <person name="Hausherr A."/>
            <person name="Tavares R."/>
            <person name="Schaffer M."/>
            <person name="Obermeier A."/>
            <person name="Miksch C."/>
            <person name="Mitina O."/>
            <person name="Ellwart J."/>
            <person name="Hallek M."/>
            <person name="Krause G."/>
        </authorList>
    </citation>
    <scope>FUNCTION</scope>
    <scope>INTERACTION WITH IL6ST</scope>
</reference>
<reference key="33">
    <citation type="journal article" date="2009" name="BMC Immunol.">
        <title>Identification of SH3 domain interaction partners of human FasL (CD178) by phage display screening.</title>
        <authorList>
            <person name="Voss M."/>
            <person name="Lettau M."/>
            <person name="Janssen O."/>
        </authorList>
    </citation>
    <scope>INTERACTION WITH FASLG</scope>
</reference>
<reference key="34">
    <citation type="journal article" date="2009" name="Eur. J. Cancer">
        <title>The oncogenic activity of the Src family kinase Hck requires the cooperative action of the plasma membrane- and lysosome-associated isoforms.</title>
        <authorList>
            <person name="Poincloux R."/>
            <person name="Al Saati T."/>
            <person name="Maridonneau-Parini I."/>
            <person name="Le Cabec V."/>
        </authorList>
    </citation>
    <scope>FUNCTION IN REORGANIZATION OF ACTIN CYTOSKELETON AND CELL PROLIFERATION</scope>
    <scope>ROLE IN DISEASE</scope>
</reference>
<reference key="35">
    <citation type="journal article" date="2009" name="J. Cell. Biochem.">
        <title>Alternative splicing of ADAM15 regulates its interactions with cellular SH3 proteins.</title>
        <authorList>
            <person name="Kleino I."/>
            <person name="Ortiz R.M."/>
            <person name="Yritys M."/>
            <person name="Huovila A.P."/>
            <person name="Saksela K."/>
        </authorList>
    </citation>
    <scope>INTERACTION WITH ADAM15</scope>
</reference>
<reference key="36">
    <citation type="journal article" date="2009" name="Mol. Cell. Proteomics">
        <title>Large-scale proteomics analysis of the human kinome.</title>
        <authorList>
            <person name="Oppermann F.S."/>
            <person name="Gnad F."/>
            <person name="Olsen J.V."/>
            <person name="Hornberger R."/>
            <person name="Greff Z."/>
            <person name="Keri G."/>
            <person name="Mann M."/>
            <person name="Daub H."/>
        </authorList>
    </citation>
    <scope>PHOSPHORYLATION [LARGE SCALE ANALYSIS] AT THR-202 AND SER-462</scope>
    <scope>IDENTIFICATION BY MASS SPECTROMETRY [LARGE SCALE ANALYSIS]</scope>
</reference>
<reference key="37">
    <citation type="journal article" date="2010" name="FEBS Lett.">
        <title>c-Abl and Src-family kinases cross-talk in regulation of myeloid cell migration.</title>
        <authorList>
            <person name="Baruzzi A."/>
            <person name="Iacobucci I."/>
            <person name="Soverini S."/>
            <person name="Lowell C.A."/>
            <person name="Martinelli G."/>
            <person name="Berton G."/>
        </authorList>
    </citation>
    <scope>FUNCTION IN ABL1-MEDIATED CELL MIGRATION</scope>
    <scope>IDENTIFICATION IN A COMPLEX WITH ITGB1 AND WITH ABL1</scope>
</reference>
<reference key="38">
    <citation type="journal article" date="2010" name="J. Biol. Chem.">
        <title>Expression of a Src family kinase in chronic myelogenous leukemia cells induces resistance to imatinib in a kinase-dependent manner.</title>
        <authorList>
            <person name="Pene-Dumitrescu T."/>
            <person name="Smithgall T.E."/>
        </authorList>
    </citation>
    <scope>ROLE IN DISEASE</scope>
    <scope>FUNCTION IN PHOSPHORYLATION OF THE BCR-ABL FUSION PROTEIN</scope>
</reference>
<reference key="39">
    <citation type="journal article" date="2008" name="Eur. J. Cell Biol.">
        <title>Hematopoietic cell kinase (Hck) isoforms and phagocyte duties - from signaling and actin reorganization to migration and phagocytosis.</title>
        <authorList>
            <person name="Guiet R."/>
            <person name="Poincloux R."/>
            <person name="Castandet J."/>
            <person name="Marois L."/>
            <person name="Labrousse A."/>
            <person name="Le Cabec V."/>
            <person name="Maridonneau-Parini I."/>
        </authorList>
    </citation>
    <scope>REVIEW ON ROLE IN PHAGOCYTOSIS AND SUBSTRATES</scope>
</reference>
<reference key="40">
    <citation type="journal article" date="2011" name="Arch. Biochem. Biophys.">
        <title>Protein tyrosine kinases in neutrophil activation and recruitment.</title>
        <authorList>
            <person name="Zarbock A."/>
            <person name="Ley K."/>
        </authorList>
    </citation>
    <scope>ROLE IN NEUTROPHIL FUNCTION</scope>
    <scope>SIGNALING</scope>
</reference>
<reference key="41">
    <citation type="journal article" date="2014" name="J. Proteomics">
        <title>An enzyme assisted RP-RPLC approach for in-depth analysis of human liver phosphoproteome.</title>
        <authorList>
            <person name="Bian Y."/>
            <person name="Song C."/>
            <person name="Cheng K."/>
            <person name="Dong M."/>
            <person name="Wang F."/>
            <person name="Huang J."/>
            <person name="Sun D."/>
            <person name="Wang L."/>
            <person name="Ye M."/>
            <person name="Zou H."/>
        </authorList>
    </citation>
    <scope>PHOSPHORYLATION [LARGE SCALE ANALYSIS] AT THR-36</scope>
    <scope>IDENTIFICATION BY MASS SPECTROMETRY [LARGE SCALE ANALYSIS]</scope>
    <source>
        <tissue>Liver</tissue>
    </source>
</reference>
<reference key="42">
    <citation type="journal article" date="2015" name="Biomed. Rep.">
        <title>Molecular characterization of WDCP, a novel fusion partner for the anaplastic lymphoma tyrosine kinase ALK.</title>
        <authorList>
            <person name="Yokoyama N."/>
            <person name="Miller W.T."/>
        </authorList>
    </citation>
    <scope>INTERACTION WITH WDCP</scope>
</reference>
<reference key="43">
    <citation type="journal article" date="2015" name="Proteomics">
        <title>N-terminome analysis of the human mitochondrial proteome.</title>
        <authorList>
            <person name="Vaca Jacome A.S."/>
            <person name="Rabilloud T."/>
            <person name="Schaeffer-Reiss C."/>
            <person name="Rompais M."/>
            <person name="Ayoub D."/>
            <person name="Lane L."/>
            <person name="Bairoch A."/>
            <person name="Van Dorsselaer A."/>
            <person name="Carapito C."/>
        </authorList>
    </citation>
    <scope>IDENTIFICATION BY MASS SPECTROMETRY [LARGE SCALE ANALYSIS]</scope>
</reference>
<reference key="44">
    <citation type="journal article" date="1997" name="FEBS Lett.">
        <title>Sequential assignment and secondary structure determination for the Src homology 2 domain of hematopoietic cellular kinase.</title>
        <authorList>
            <person name="Zhang W."/>
            <person name="Smithgall T.E."/>
            <person name="Gmeiner W.H."/>
        </authorList>
    </citation>
    <scope>STRUCTURE BY NMR OF 140-245</scope>
</reference>
<reference key="45">
    <citation type="journal article" date="1997" name="Nature">
        <title>Crystal structure of the Src family tyrosine kinase Hck.</title>
        <authorList>
            <person name="Sicheri F."/>
            <person name="Moarefi I."/>
            <person name="Kuriyan J."/>
        </authorList>
    </citation>
    <scope>X-RAY CRYSTALLOGRAPHY (2.6 ANGSTROMS) OF 78-526 IN COMPLEX WITH CALCIUM</scope>
    <scope>PHOSPHORYLATION AT TYR-522</scope>
</reference>
<reference key="46">
    <citation type="journal article" date="1998" name="Biochemistry">
        <title>RT loop flexibility enhances the specificity of Src family SH3 domains for HIV-1 Nef.</title>
        <authorList>
            <person name="Arold S."/>
            <person name="O'Brien R."/>
            <person name="Franken P."/>
            <person name="Strub M.-P."/>
            <person name="Hoh F."/>
            <person name="Dumas C."/>
            <person name="Ladbury J.E."/>
        </authorList>
    </citation>
    <scope>X-RAY CRYSTALLOGRAPHY (2.6 ANGSTROMS) OF 81-137</scope>
</reference>
<reference key="47">
    <citation type="journal article" date="1998" name="J. Mol. Biol.">
        <title>Solution structure of the human Hck SH3 domain and identification of its ligand binding site.</title>
        <authorList>
            <person name="Horita D.A."/>
            <person name="Baldisseri D.M."/>
            <person name="Zhang W."/>
            <person name="Altieri A.S."/>
            <person name="Smithgall T.E."/>
            <person name="Gmeiner W.H."/>
            <person name="Byrd R.A."/>
        </authorList>
    </citation>
    <scope>STRUCTURE BY NMR OF 72-143</scope>
</reference>
<reference key="48">
    <citation type="journal article" date="1999" name="Mol. Cell">
        <title>Crystal structure of Hck in complex with a Src family-selective tyrosine kinase inhibitor.</title>
        <authorList>
            <person name="Schindler T."/>
            <person name="Sicheri F."/>
            <person name="Pico A."/>
            <person name="Gazit A."/>
            <person name="Levitzki A."/>
            <person name="Kuriyan J."/>
        </authorList>
    </citation>
    <scope>X-RAY CRYSTALLOGRAPHY (2.00 ANGSTROMS) OF 81-522 IN COMPLEX WITH THE PYRAZOLO PYRIMIDINE-TYPE INHIBITOR PP1</scope>
    <scope>PHOSPHORYLATION AT TYR-522</scope>
</reference>
<reference key="49">
    <citation type="journal article" date="2006" name="Bioorg. Med. Chem. Lett.">
        <title>Discovery of A-770041, a src-family selective orally active lck inhibitor that prevents organ allograft rejection.</title>
        <authorList>
            <person name="Burchat A."/>
            <person name="Borhani D.W."/>
            <person name="Calderwood D.J."/>
            <person name="Hirst G.C."/>
            <person name="Li B."/>
            <person name="Stachlewitz R.F."/>
        </authorList>
    </citation>
    <scope>X-RAY CRYSTALLOGRAPHY (2.15 ANGSTROMS) OF 81-522 IN COMPLEXES WITH INHIBITORS A-420983; A-641359 AND A-770041</scope>
    <scope>ACTIVITY REGULATION</scope>
    <scope>PHOSPHORYLATION AT TYR-522</scope>
</reference>
<reference key="50">
    <citation type="journal article" date="2006" name="Bioorg. Med. Chem. Lett.">
        <title>The development of 2-benzimidazole substituted pyrimidine based inhibitors of lymphocyte specific kinase (Lck).</title>
        <authorList>
            <person name="Sabat M."/>
            <person name="VanRens J.C."/>
            <person name="Laufersweiler M.J."/>
            <person name="Brugel T.A."/>
            <person name="Maier J."/>
            <person name="Golebiowski A."/>
            <person name="De B."/>
            <person name="Easwaran V."/>
            <person name="Hsieh L.C."/>
            <person name="Walter R.L."/>
            <person name="Mekel M.J."/>
            <person name="Evdokimov A."/>
            <person name="Janusz M.J."/>
        </authorList>
    </citation>
    <scope>X-RAY CRYSTALLOGRAPHY (2.00 ANGSTROMS) OF 247-513 IN COMPLEX WITH INHIBITOR PG-1009247</scope>
</reference>
<reference key="51">
    <citation type="journal article" date="2007" name="J. Mol. Biol.">
        <title>Solution structure of a Hck SH3 domain ligand complex reveals novel interaction modes.</title>
        <authorList>
            <person name="Schmidt H."/>
            <person name="Hoffmann S."/>
            <person name="Tran T."/>
            <person name="Stoldt M."/>
            <person name="Stangler T."/>
            <person name="Wiesehan K."/>
            <person name="Willbold D."/>
        </authorList>
    </citation>
    <scope>STRUCTURE BY NMR OF 61-140 IN COMPLEX WITH PROLINE-RICH SYNTHETIC PEPTIDE</scope>
</reference>
<reference key="52">
    <citation type="journal article" date="2010" name="J. Biol. Chem.">
        <title>Crystal structure of the Src family kinase Hck SH3-SH2 linker regulatory region supports an SH3-dominant activation mechanism.</title>
        <authorList>
            <person name="Alvarado J.J."/>
            <person name="Betts L."/>
            <person name="Moroco J.A."/>
            <person name="Smithgall T.E."/>
            <person name="Yeh J.I."/>
        </authorList>
    </citation>
    <scope>X-RAY CRYSTALLOGRAPHY (2.61 ANGSTROMS) OF 72-256</scope>
    <scope>ACTIVITY REGULATION</scope>
    <scope>CATALYTIC ACTIVITY</scope>
</reference>
<reference key="53">
    <citation type="journal article" date="2011" name="PLoS ONE">
        <title>Molecular design, functional characterization and structural basis of a protein inhibitor against the HIV-1 pathogenicity factor Nef.</title>
        <authorList>
            <person name="Breuer S."/>
            <person name="Schievink S.I."/>
            <person name="Schulte A."/>
            <person name="Blankenfeldt W."/>
            <person name="Fackler O.T."/>
            <person name="Geyer M."/>
        </authorList>
    </citation>
    <scope>X-RAY CRYSTALLOGRAPHY (3.45 ANGSTROMS) OF 79-138 IN COMPLEX WITH HIV-1 NEF</scope>
    <scope>INTERACTION WITH HIV-1 NEF (MICROBIAL INFECTION)</scope>
</reference>
<reference key="54">
    <citation type="journal article" date="2011" name="Traffic">
        <title>Conformation of the dileucine-based sorting motif in HIV-1 Nef revealed by intermolecular domain assembly.</title>
        <authorList>
            <person name="Horenkamp F.A."/>
            <person name="Breuer S."/>
            <person name="Schulte A."/>
            <person name="Lulf S."/>
            <person name="Weyand M."/>
            <person name="Saksela K."/>
            <person name="Geyer M."/>
        </authorList>
    </citation>
    <scope>X-RAY CRYSTALLOGRAPHY (2.35 ANGSTROMS) OF 79-138 IN COMPLEX WITH HIV-1 NEF</scope>
    <scope>INTERACTION WITH HIV-1 NEF (MICROBIAL INFECTION)</scope>
</reference>
<reference key="55">
    <citation type="journal article" date="2007" name="Nature">
        <title>Patterns of somatic mutation in human cancer genomes.</title>
        <authorList>
            <person name="Greenman C."/>
            <person name="Stephens P."/>
            <person name="Smith R."/>
            <person name="Dalgliesh G.L."/>
            <person name="Hunter C."/>
            <person name="Bignell G."/>
            <person name="Davies H."/>
            <person name="Teague J."/>
            <person name="Butler A."/>
            <person name="Stevens C."/>
            <person name="Edkins S."/>
            <person name="O'Meara S."/>
            <person name="Vastrik I."/>
            <person name="Schmidt E.E."/>
            <person name="Avis T."/>
            <person name="Barthorpe S."/>
            <person name="Bhamra G."/>
            <person name="Buck G."/>
            <person name="Choudhury B."/>
            <person name="Clements J."/>
            <person name="Cole J."/>
            <person name="Dicks E."/>
            <person name="Forbes S."/>
            <person name="Gray K."/>
            <person name="Halliday K."/>
            <person name="Harrison R."/>
            <person name="Hills K."/>
            <person name="Hinton J."/>
            <person name="Jenkinson A."/>
            <person name="Jones D."/>
            <person name="Menzies A."/>
            <person name="Mironenko T."/>
            <person name="Perry J."/>
            <person name="Raine K."/>
            <person name="Richardson D."/>
            <person name="Shepherd R."/>
            <person name="Small A."/>
            <person name="Tofts C."/>
            <person name="Varian J."/>
            <person name="Webb T."/>
            <person name="West S."/>
            <person name="Widaa S."/>
            <person name="Yates A."/>
            <person name="Cahill D.P."/>
            <person name="Louis D.N."/>
            <person name="Goldstraw P."/>
            <person name="Nicholson A.G."/>
            <person name="Brasseur F."/>
            <person name="Looijenga L."/>
            <person name="Weber B.L."/>
            <person name="Chiew Y.-E."/>
            <person name="DeFazio A."/>
            <person name="Greaves M.F."/>
            <person name="Green A.R."/>
            <person name="Campbell P."/>
            <person name="Birney E."/>
            <person name="Easton D.F."/>
            <person name="Chenevix-Trench G."/>
            <person name="Tan M.-H."/>
            <person name="Khoo S.K."/>
            <person name="Teh B.T."/>
            <person name="Yuen S.T."/>
            <person name="Leung S.Y."/>
            <person name="Wooster R."/>
            <person name="Futreal P.A."/>
            <person name="Stratton M.R."/>
        </authorList>
    </citation>
    <scope>VARIANTS [LARGE SCALE ANALYSIS] THR-44; LEU-105 AND GLY-399</scope>
</reference>
<reference key="56">
    <citation type="journal article" date="2022" name="J. Allergy Clin. Immunol.">
        <title>Early-onset pulmonary and cutaneous vasculitis driven by constitutively active SRC-family kinase HCK.</title>
        <authorList>
            <person name="Kanderova V."/>
            <person name="Svobodova T."/>
            <person name="Borna S."/>
            <person name="Fejtkova M."/>
            <person name="Martinu V."/>
            <person name="Paderova J."/>
            <person name="Svaton M."/>
            <person name="Kralova J."/>
            <person name="Fronkova E."/>
            <person name="Klocperk A."/>
            <person name="Pruhova S."/>
            <person name="Lee-Kirsch M.A."/>
            <person name="Hornofova L."/>
            <person name="Koblizek M."/>
            <person name="Novak P."/>
            <person name="Zimmermannova O."/>
            <person name="Parackova Z."/>
            <person name="Sediva A."/>
            <person name="Kalina T."/>
            <person name="Janda A."/>
            <person name="Kayserova J."/>
            <person name="Dvorakova M."/>
            <person name="Macek M."/>
            <person name="Pohunek P."/>
            <person name="Sedlacek P."/>
            <person name="Poh A."/>
            <person name="Ernst M."/>
            <person name="Brdicka T."/>
            <person name="Hrusak O."/>
            <person name="Lebl J."/>
        </authorList>
    </citation>
    <scope>VARIANT AIPCV 515-TYR--PRO-526 DEL</scope>
    <scope>CHARACTERIZATION OF VARIANT AIPCV 515-TYR--PRO-526 DEL</scope>
    <scope>INVOLVEMENT IN AIPCV</scope>
</reference>
<comment type="function">
    <text evidence="8 11 12 15 16 18 20 21 22 27 29 30 33 34 36 42 45 49 50">Non-receptor tyrosine-protein kinase found in hematopoietic cells that transmits signals from cell surface receptors and plays an important role in the regulation of innate immune responses, including neutrophil, monocyte, macrophage and mast cell functions, phagocytosis, cell survival and proliferation, cell adhesion and migration. Acts downstream of receptors that bind the Fc region of immunoglobulins, such as FCGR1A and FCGR2A, but also CSF3R, PLAUR, the receptors for IFNG, IL2, IL6 and IL8, and integrins, such as ITGB1 and ITGB2. During the phagocytic process, mediates mobilization of secretory lysosomes, degranulation, and activation of NADPH oxidase to bring about the respiratory burst. Plays a role in the release of inflammatory molecules. Promotes reorganization of the actin cytoskeleton and actin polymerization, formation of podosomes and cell protrusions. Inhibits TP73-mediated transcription activation and TP73-mediated apoptosis. Phosphorylates CBL in response to activation of immunoglobulin gamma Fc region receptors. Phosphorylates ADAM15, BCR, ELMO1, FCGR2A, GAB1, GAB2, RAPGEF1, STAT5B, TP73, VAV1 and WAS.</text>
</comment>
<comment type="catalytic activity">
    <reaction evidence="6 8 11 22 35 42 44 45 46">
        <text>L-tyrosyl-[protein] + ATP = O-phospho-L-tyrosyl-[protein] + ADP + H(+)</text>
        <dbReference type="Rhea" id="RHEA:10596"/>
        <dbReference type="Rhea" id="RHEA-COMP:10136"/>
        <dbReference type="Rhea" id="RHEA-COMP:20101"/>
        <dbReference type="ChEBI" id="CHEBI:15378"/>
        <dbReference type="ChEBI" id="CHEBI:30616"/>
        <dbReference type="ChEBI" id="CHEBI:46858"/>
        <dbReference type="ChEBI" id="CHEBI:61978"/>
        <dbReference type="ChEBI" id="CHEBI:456216"/>
        <dbReference type="EC" id="2.7.10.2"/>
    </reaction>
</comment>
<comment type="activity regulation">
    <text evidence="10 11 12 23 24 35 42 48 49">Subject to autoinhibition, mediated by intramolecular interactions involving the SH2 and SH3 domains. Kinase activity is also regulated by phosphorylation at regulatory tyrosine residues. Phosphorylation at Tyr-411 is required for optimal activity. Phosphorylation at Tyr-522 inhibits kinase activity. Inhibited by PP1 and A-770041.</text>
</comment>
<comment type="subunit">
    <text evidence="1 8 9 12 15 18 21 25 26 27 29 31 32 33 39 44 45 47 49 50">Interacts (via SH2 domain) with FLT3 (tyrosine phosphorylated). Interacts with VAV1, WAS and RAPGEF1 (By similarity). This interaction stimulates its tyrosine-kinase activity. Interacts with ARRB1 and ARRB2. Interacts with ADAM15. Interacts with FASLG. Interacts with CBL. Interacts with FCGR1A; the interaction may be indirect. Interacts with IL6ST. Interacts (via SH3 domain) with ELMO1. Interacts (via SH3 domain) with TP73. Interacts with YAP1. Interacts with ABL1 and ITGB1, and thereby recruits ABL1 to activated ITGB1. Interacts (via SH3 domain) with WDCP.</text>
</comment>
<comment type="subunit">
    <text evidence="14">(Microbial infection) Interacts (via SH3 domain) with HEV ORF3 protein.</text>
</comment>
<comment type="subunit">
    <text evidence="13 24 37 38 48">(Microbial infection) Interacts (via SH3 domain) with HIV-1 Nef and Vif.</text>
</comment>
<comment type="interaction">
    <interactant intactId="EBI-346340">
        <id>P08631</id>
    </interactant>
    <interactant intactId="EBI-1536151">
        <id>O14672</id>
        <label>ADAM10</label>
    </interactant>
    <organismsDiffer>false</organismsDiffer>
    <experiments>2</experiments>
</comment>
<comment type="interaction">
    <interactant intactId="EBI-346340">
        <id>P08631</id>
    </interactant>
    <interactant intactId="EBI-2625825">
        <id>O43184</id>
        <label>ADAM12</label>
    </interactant>
    <organismsDiffer>false</organismsDiffer>
    <experiments>2</experiments>
</comment>
<comment type="interaction">
    <interactant intactId="EBI-346340">
        <id>P08631</id>
    </interactant>
    <interactant intactId="EBI-77818">
        <id>Q13444</id>
        <label>ADAM15</label>
    </interactant>
    <organismsDiffer>false</organismsDiffer>
    <experiments>4</experiments>
</comment>
<comment type="interaction">
    <interactant intactId="EBI-346340">
        <id>P08631</id>
    </interactant>
    <interactant intactId="EBI-79934">
        <id>P09917</id>
        <label>ALOX5</label>
    </interactant>
    <organismsDiffer>false</organismsDiffer>
    <experiments>2</experiments>
</comment>
<comment type="interaction">
    <interactant intactId="EBI-346340">
        <id>P08631</id>
    </interactant>
    <interactant intactId="EBI-346622">
        <id>Q9ULH1</id>
        <label>ASAP1</label>
    </interactant>
    <organismsDiffer>false</organismsDiffer>
    <experiments>2</experiments>
</comment>
<comment type="interaction">
    <interactant intactId="EBI-346340">
        <id>P08631</id>
    </interactant>
    <interactant intactId="EBI-297353">
        <id>P00533</id>
        <label>EGFR</label>
    </interactant>
    <organismsDiffer>false</organismsDiffer>
    <experiments>3</experiments>
</comment>
<comment type="interaction">
    <interactant intactId="EBI-346340">
        <id>P08631</id>
    </interactant>
    <interactant intactId="EBI-346417">
        <id>Q92556</id>
        <label>ELMO1</label>
    </interactant>
    <organismsDiffer>false</organismsDiffer>
    <experiments>4</experiments>
</comment>
<comment type="interaction">
    <interactant intactId="EBI-346340">
        <id>P08631</id>
    </interactant>
    <interactant intactId="EBI-720706">
        <id>P21860</id>
        <label>ERBB3</label>
    </interactant>
    <organismsDiffer>false</organismsDiffer>
    <experiments>2</experiments>
</comment>
<comment type="interaction">
    <interactant intactId="EBI-346340">
        <id>P08631</id>
    </interactant>
    <interactant intactId="EBI-349832">
        <id>Q9HD26</id>
        <label>GOPC</label>
    </interactant>
    <organismsDiffer>false</organismsDiffer>
    <experiments>3</experiments>
</comment>
<comment type="interaction">
    <interactant intactId="EBI-346340">
        <id>P08631</id>
    </interactant>
    <interactant intactId="EBI-352572">
        <id>P08238</id>
        <label>HSP90AB1</label>
    </interactant>
    <organismsDiffer>false</organismsDiffer>
    <experiments>4</experiments>
</comment>
<comment type="interaction">
    <interactant intactId="EBI-346340">
        <id>P08631</id>
    </interactant>
    <interactant intactId="EBI-1364">
        <id>Q07666</id>
        <label>KHDRBS1</label>
    </interactant>
    <organismsDiffer>false</organismsDiffer>
    <experiments>4</experiments>
</comment>
<comment type="interaction">
    <interactant intactId="EBI-346340">
        <id>P08631</id>
    </interactant>
    <interactant intactId="EBI-1379503">
        <id>P10721</id>
        <label>KIT</label>
    </interactant>
    <organismsDiffer>false</organismsDiffer>
    <experiments>2</experiments>
</comment>
<comment type="interaction">
    <interactant intactId="EBI-346340">
        <id>P08631</id>
    </interactant>
    <interactant intactId="EBI-10171697">
        <id>Q6A162</id>
        <label>KRT40</label>
    </interactant>
    <organismsDiffer>false</organismsDiffer>
    <experiments>3</experiments>
</comment>
<comment type="interaction">
    <interactant intactId="EBI-346340">
        <id>P08631</id>
    </interactant>
    <interactant intactId="EBI-10172052">
        <id>P60411</id>
        <label>KRTAP10-9</label>
    </interactant>
    <organismsDiffer>false</organismsDiffer>
    <experiments>3</experiments>
</comment>
<comment type="interaction">
    <interactant intactId="EBI-346340">
        <id>P08631</id>
    </interactant>
    <interactant intactId="EBI-742948">
        <id>Q5JR59</id>
        <label>MTUS2</label>
    </interactant>
    <organismsDiffer>false</organismsDiffer>
    <experiments>3</experiments>
</comment>
<comment type="interaction">
    <interactant intactId="EBI-346340">
        <id>P08631</id>
    </interactant>
    <interactant intactId="EBI-6374637">
        <id>P59046</id>
        <label>NLRP12</label>
    </interactant>
    <organismsDiffer>false</organismsDiffer>
    <experiments>4</experiments>
</comment>
<comment type="interaction">
    <interactant intactId="EBI-346340">
        <id>P08631</id>
    </interactant>
    <interactant intactId="EBI-945833">
        <id>Q7Z3S9</id>
        <label>NOTCH2NLA</label>
    </interactant>
    <organismsDiffer>false</organismsDiffer>
    <experiments>3</experiments>
</comment>
<comment type="interaction">
    <interactant intactId="EBI-346340">
        <id>P08631</id>
    </interactant>
    <interactant intactId="EBI-1045887">
        <id>Q13177</id>
        <label>PAK2</label>
    </interactant>
    <organismsDiffer>false</organismsDiffer>
    <experiments>2</experiments>
</comment>
<comment type="interaction">
    <interactant intactId="EBI-346340">
        <id>P08631</id>
    </interactant>
    <interactant intactId="EBI-310624">
        <id>Q8WUM4</id>
        <label>PDCD6IP</label>
    </interactant>
    <organismsDiffer>false</organismsDiffer>
    <experiments>4</experiments>
</comment>
<comment type="interaction">
    <interactant intactId="EBI-346340">
        <id>P08631</id>
    </interactant>
    <interactant intactId="EBI-297487">
        <id>Q07889</id>
        <label>SOS1</label>
    </interactant>
    <organismsDiffer>false</organismsDiffer>
    <experiments>4</experiments>
</comment>
<comment type="interaction">
    <interactant intactId="EBI-346340">
        <id>P08631</id>
    </interactant>
    <interactant intactId="EBI-346375">
        <id>P42768</id>
        <label>WAS</label>
    </interactant>
    <organismsDiffer>false</organismsDiffer>
    <experiments>9</experiments>
</comment>
<comment type="interaction">
    <interactant intactId="EBI-346340">
        <id>P08631</id>
    </interactant>
    <interactant intactId="EBI-346356">
        <id>O43516</id>
        <label>WIPF1</label>
    </interactant>
    <organismsDiffer>false</organismsDiffer>
    <experiments>3</experiments>
</comment>
<comment type="interaction">
    <interactant intactId="EBI-346340">
        <id>P08631</id>
    </interactant>
    <interactant intactId="EBI-15672419">
        <id>P03406</id>
        <label>nef</label>
    </interactant>
    <organismsDiffer>true</organismsDiffer>
    <experiments>2</experiments>
</comment>
<comment type="interaction">
    <interactant intactId="EBI-346340">
        <id>P08631</id>
    </interactant>
    <interactant intactId="EBI-7460704">
        <id>Q90VU7</id>
        <label>nef</label>
    </interactant>
    <organismsDiffer>true</organismsDiffer>
    <experiments>2</experiments>
</comment>
<comment type="interaction">
    <interactant intactId="EBI-346340">
        <id>P08631</id>
    </interactant>
    <interactant intactId="EBI-779991">
        <id>P12504</id>
        <label>vif</label>
    </interactant>
    <organismsDiffer>true</organismsDiffer>
    <experiments>3</experiments>
</comment>
<comment type="interaction">
    <interactant intactId="EBI-346340">
        <id>P08631</id>
    </interactant>
    <interactant intactId="EBI-710506">
        <id>O92972</id>
    </interactant>
    <organismsDiffer>true</organismsDiffer>
    <experiments>2</experiments>
</comment>
<comment type="interaction">
    <interactant intactId="EBI-346340">
        <id>P08631</id>
    </interactant>
    <interactant intactId="EBI-706378">
        <id>P27958</id>
    </interactant>
    <organismsDiffer>true</organismsDiffer>
    <experiments>5</experiments>
</comment>
<comment type="interaction">
    <interactant intactId="EBI-9834454">
        <id>P08631-2</id>
    </interactant>
    <interactant intactId="EBI-712648">
        <id>O95994</id>
        <label>AGR2</label>
    </interactant>
    <organismsDiffer>false</organismsDiffer>
    <experiments>3</experiments>
</comment>
<comment type="interaction">
    <interactant intactId="EBI-9834454">
        <id>P08631-2</id>
    </interactant>
    <interactant intactId="EBI-953896">
        <id>Q9NP55</id>
        <label>BPIFA1</label>
    </interactant>
    <organismsDiffer>false</organismsDiffer>
    <experiments>3</experiments>
</comment>
<comment type="interaction">
    <interactant intactId="EBI-9834454">
        <id>P08631-2</id>
    </interactant>
    <interactant intactId="EBI-518228">
        <id>P22681</id>
        <label>CBL</label>
    </interactant>
    <organismsDiffer>false</organismsDiffer>
    <experiments>2</experiments>
</comment>
<comment type="interaction">
    <interactant intactId="EBI-9834454">
        <id>P08631-2</id>
    </interactant>
    <interactant intactId="EBI-347573">
        <id>A6NC98</id>
        <label>CCDC88B</label>
    </interactant>
    <organismsDiffer>false</organismsDiffer>
    <experiments>3</experiments>
</comment>
<comment type="interaction">
    <interactant intactId="EBI-9834454">
        <id>P08631-2</id>
    </interactant>
    <interactant intactId="EBI-1188472">
        <id>P78358</id>
        <label>CTAG1B</label>
    </interactant>
    <organismsDiffer>false</organismsDiffer>
    <experiments>3</experiments>
</comment>
<comment type="interaction">
    <interactant intactId="EBI-9834454">
        <id>P08631-2</id>
    </interactant>
    <interactant intactId="EBI-19113794">
        <id>Q8WUJ1</id>
        <label>CYB5D2</label>
    </interactant>
    <organismsDiffer>false</organismsDiffer>
    <experiments>3</experiments>
</comment>
<comment type="interaction">
    <interactant intactId="EBI-9834454">
        <id>P08631-2</id>
    </interactant>
    <interactant intactId="EBI-3867333">
        <id>A8MQ03</id>
        <label>CYSRT1</label>
    </interactant>
    <organismsDiffer>false</organismsDiffer>
    <experiments>3</experiments>
</comment>
<comment type="interaction">
    <interactant intactId="EBI-9834454">
        <id>P08631-2</id>
    </interactant>
    <interactant intactId="EBI-750641">
        <id>Q5TD97</id>
        <label>FHL5</label>
    </interactant>
    <organismsDiffer>false</organismsDiffer>
    <experiments>3</experiments>
</comment>
<comment type="interaction">
    <interactant intactId="EBI-9834454">
        <id>P08631-2</id>
    </interactant>
    <interactant intactId="EBI-725515">
        <id>O43559</id>
        <label>FRS3</label>
    </interactant>
    <organismsDiffer>false</organismsDiffer>
    <experiments>2</experiments>
</comment>
<comment type="interaction">
    <interactant intactId="EBI-9834454">
        <id>P08631-2</id>
    </interactant>
    <interactant intactId="EBI-11102276">
        <id>Q9HD26-2</id>
        <label>GOPC</label>
    </interactant>
    <organismsDiffer>false</organismsDiffer>
    <experiments>3</experiments>
</comment>
<comment type="interaction">
    <interactant intactId="EBI-9834454">
        <id>P08631-2</id>
    </interactant>
    <interactant intactId="EBI-7116203">
        <id>O75031</id>
        <label>HSF2BP</label>
    </interactant>
    <organismsDiffer>false</organismsDiffer>
    <experiments>3</experiments>
</comment>
<comment type="interaction">
    <interactant intactId="EBI-9834454">
        <id>P08631-2</id>
    </interactant>
    <interactant intactId="EBI-6509505">
        <id>Q0VD86</id>
        <label>INCA1</label>
    </interactant>
    <organismsDiffer>false</organismsDiffer>
    <experiments>3</experiments>
</comment>
<comment type="interaction">
    <interactant intactId="EBI-9834454">
        <id>P08631-2</id>
    </interactant>
    <interactant intactId="EBI-10981970">
        <id>Q5T749</id>
        <label>KPRP</label>
    </interactant>
    <organismsDiffer>false</organismsDiffer>
    <experiments>3</experiments>
</comment>
<comment type="interaction">
    <interactant intactId="EBI-9834454">
        <id>P08631-2</id>
    </interactant>
    <interactant intactId="EBI-948001">
        <id>Q15323</id>
        <label>KRT31</label>
    </interactant>
    <organismsDiffer>false</organismsDiffer>
    <experiments>3</experiments>
</comment>
<comment type="interaction">
    <interactant intactId="EBI-9834454">
        <id>P08631-2</id>
    </interactant>
    <interactant intactId="EBI-1047093">
        <id>O76011</id>
        <label>KRT34</label>
    </interactant>
    <organismsDiffer>false</organismsDiffer>
    <experiments>3</experiments>
</comment>
<comment type="interaction">
    <interactant intactId="EBI-9834454">
        <id>P08631-2</id>
    </interactant>
    <interactant intactId="EBI-1058674">
        <id>Q92764</id>
        <label>KRT35</label>
    </interactant>
    <organismsDiffer>false</organismsDiffer>
    <experiments>3</experiments>
</comment>
<comment type="interaction">
    <interactant intactId="EBI-9834454">
        <id>P08631-2</id>
    </interactant>
    <interactant intactId="EBI-11958506">
        <id>O76013-2</id>
        <label>KRT36</label>
    </interactant>
    <organismsDiffer>false</organismsDiffer>
    <experiments>3</experiments>
</comment>
<comment type="interaction">
    <interactant intactId="EBI-9834454">
        <id>P08631-2</id>
    </interactant>
    <interactant intactId="EBI-10171697">
        <id>Q6A162</id>
        <label>KRT40</label>
    </interactant>
    <organismsDiffer>false</organismsDiffer>
    <experiments>3</experiments>
</comment>
<comment type="interaction">
    <interactant intactId="EBI-9834454">
        <id>P08631-2</id>
    </interactant>
    <interactant intactId="EBI-11959885">
        <id>Q07627</id>
        <label>KRTAP1-1</label>
    </interactant>
    <organismsDiffer>false</organismsDiffer>
    <experiments>3</experiments>
</comment>
<comment type="interaction">
    <interactant intactId="EBI-9834454">
        <id>P08631-2</id>
    </interactant>
    <interactant intactId="EBI-11749135">
        <id>Q8IUG1</id>
        <label>KRTAP1-3</label>
    </interactant>
    <organismsDiffer>false</organismsDiffer>
    <experiments>3</experiments>
</comment>
<comment type="interaction">
    <interactant intactId="EBI-9834454">
        <id>P08631-2</id>
    </interactant>
    <interactant intactId="EBI-10172290">
        <id>P60409</id>
        <label>KRTAP10-7</label>
    </interactant>
    <organismsDiffer>false</organismsDiffer>
    <experiments>3</experiments>
</comment>
<comment type="interaction">
    <interactant intactId="EBI-9834454">
        <id>P08631-2</id>
    </interactant>
    <interactant intactId="EBI-10171774">
        <id>P60410</id>
        <label>KRTAP10-8</label>
    </interactant>
    <organismsDiffer>false</organismsDiffer>
    <experiments>3</experiments>
</comment>
<comment type="interaction">
    <interactant intactId="EBI-9834454">
        <id>P08631-2</id>
    </interactant>
    <interactant intactId="EBI-10172052">
        <id>P60411</id>
        <label>KRTAP10-9</label>
    </interactant>
    <organismsDiffer>false</organismsDiffer>
    <experiments>3</experiments>
</comment>
<comment type="interaction">
    <interactant intactId="EBI-9834454">
        <id>P08631-2</id>
    </interactant>
    <interactant intactId="EBI-9996449">
        <id>Q9BYR8</id>
        <label>KRTAP3-1</label>
    </interactant>
    <organismsDiffer>false</organismsDiffer>
    <experiments>3</experiments>
</comment>
<comment type="interaction">
    <interactant intactId="EBI-9834454">
        <id>P08631-2</id>
    </interactant>
    <interactant intactId="EBI-722444">
        <id>P21741</id>
        <label>MDK</label>
    </interactant>
    <organismsDiffer>false</organismsDiffer>
    <experiments>3</experiments>
</comment>
<comment type="interaction">
    <interactant intactId="EBI-9834454">
        <id>P08631-2</id>
    </interactant>
    <interactant intactId="EBI-10172526">
        <id>Q9UJV3-2</id>
        <label>MID2</label>
    </interactant>
    <organismsDiffer>false</organismsDiffer>
    <experiments>3</experiments>
</comment>
<comment type="interaction">
    <interactant intactId="EBI-9834454">
        <id>P08631-2</id>
    </interactant>
    <interactant intactId="EBI-2340269">
        <id>Q13064</id>
        <label>MKRN3</label>
    </interactant>
    <organismsDiffer>false</organismsDiffer>
    <experiments>3</experiments>
</comment>
<comment type="interaction">
    <interactant intactId="EBI-9834454">
        <id>P08631-2</id>
    </interactant>
    <interactant intactId="EBI-11522433">
        <id>Q5JR59-3</id>
        <label>MTUS2</label>
    </interactant>
    <organismsDiffer>false</organismsDiffer>
    <experiments>3</experiments>
</comment>
<comment type="interaction">
    <interactant intactId="EBI-9834454">
        <id>P08631-2</id>
    </interactant>
    <interactant intactId="EBI-22310682">
        <id>P0DPK4</id>
        <label>NOTCH2NLC</label>
    </interactant>
    <organismsDiffer>false</organismsDiffer>
    <experiments>3</experiments>
</comment>
<comment type="interaction">
    <interactant intactId="EBI-9834454">
        <id>P08631-2</id>
    </interactant>
    <interactant intactId="EBI-3867416">
        <id>Q8TAK6</id>
        <label>OLIG1</label>
    </interactant>
    <organismsDiffer>false</organismsDiffer>
    <experiments>2</experiments>
</comment>
<comment type="interaction">
    <interactant intactId="EBI-9834454">
        <id>P08631-2</id>
    </interactant>
    <interactant intactId="EBI-79893">
        <id>Q92569</id>
        <label>PIK3R3</label>
    </interactant>
    <organismsDiffer>false</organismsDiffer>
    <experiments>4</experiments>
</comment>
<comment type="interaction">
    <interactant intactId="EBI-9834454">
        <id>P08631-2</id>
    </interactant>
    <interactant intactId="EBI-949255">
        <id>Q58EX7</id>
        <label>PLEKHG4</label>
    </interactant>
    <organismsDiffer>false</organismsDiffer>
    <experiments>3</experiments>
</comment>
<comment type="interaction">
    <interactant intactId="EBI-9834454">
        <id>P08631-2</id>
    </interactant>
    <interactant intactId="EBI-302345">
        <id>Q8ND90</id>
        <label>PNMA1</label>
    </interactant>
    <organismsDiffer>false</organismsDiffer>
    <experiments>3</experiments>
</comment>
<comment type="interaction">
    <interactant intactId="EBI-9834454">
        <id>P08631-2</id>
    </interactant>
    <interactant intactId="EBI-702142">
        <id>Q05397</id>
        <label>PTK2</label>
    </interactant>
    <organismsDiffer>false</organismsDiffer>
    <experiments>2</experiments>
</comment>
<comment type="interaction">
    <interactant intactId="EBI-9834454">
        <id>P08631-2</id>
    </interactant>
    <interactant intactId="EBI-740343">
        <id>Q93062-3</id>
        <label>RBPMS</label>
    </interactant>
    <organismsDiffer>false</organismsDiffer>
    <experiments>3</experiments>
</comment>
<comment type="interaction">
    <interactant intactId="EBI-9834454">
        <id>P08631-2</id>
    </interactant>
    <interactant intactId="EBI-19952306">
        <id>O14492-2</id>
        <label>SH2B2</label>
    </interactant>
    <organismsDiffer>false</organismsDiffer>
    <experiments>3</experiments>
</comment>
<comment type="interaction">
    <interactant intactId="EBI-9834454">
        <id>P08631-2</id>
    </interactant>
    <interactant intactId="EBI-750487">
        <id>Q8WW24</id>
        <label>TEKT4</label>
    </interactant>
    <organismsDiffer>false</organismsDiffer>
    <experiments>3</experiments>
</comment>
<comment type="interaction">
    <interactant intactId="EBI-9834454">
        <id>P08631-2</id>
    </interactant>
    <interactant intactId="EBI-11139477">
        <id>Q96N21</id>
        <label>TEPSIN</label>
    </interactant>
    <organismsDiffer>false</organismsDiffer>
    <experiments>3</experiments>
</comment>
<comment type="interaction">
    <interactant intactId="EBI-9834454">
        <id>P08631-2</id>
    </interactant>
    <interactant intactId="EBI-12815137">
        <id>Q96NM4-3</id>
        <label>TOX2</label>
    </interactant>
    <organismsDiffer>false</organismsDiffer>
    <experiments>3</experiments>
</comment>
<comment type="interaction">
    <interactant intactId="EBI-9834454">
        <id>P08631-2</id>
    </interactant>
    <interactant intactId="EBI-719493">
        <id>P14373</id>
        <label>TRIM27</label>
    </interactant>
    <organismsDiffer>false</organismsDiffer>
    <experiments>3</experiments>
</comment>
<comment type="interaction">
    <interactant intactId="EBI-9834454">
        <id>P08631-2</id>
    </interactant>
    <interactant intactId="EBI-742327">
        <id>Q15654</id>
        <label>TRIP6</label>
    </interactant>
    <organismsDiffer>false</organismsDiffer>
    <experiments>3</experiments>
</comment>
<comment type="interaction">
    <interactant intactId="EBI-9834454">
        <id>P08631-2</id>
    </interactant>
    <interactant intactId="EBI-720609">
        <id>O76024</id>
        <label>WFS1</label>
    </interactant>
    <organismsDiffer>false</organismsDiffer>
    <experiments>3</experiments>
</comment>
<comment type="interaction">
    <interactant intactId="EBI-9834454">
        <id>P08631-2</id>
    </interactant>
    <interactant intactId="EBI-7252920">
        <id>Q8NAM6</id>
        <label>ZSCAN4</label>
    </interactant>
    <organismsDiffer>false</organismsDiffer>
    <experiments>3</experiments>
</comment>
<comment type="subcellular location">
    <molecule>Isoform 1</molecule>
    <subcellularLocation>
        <location>Lysosome</location>
    </subcellularLocation>
    <subcellularLocation>
        <location>Membrane</location>
        <topology>Lipid-anchor</topology>
    </subcellularLocation>
    <subcellularLocation>
        <location>Cell projection</location>
        <location>Podosome membrane</location>
        <topology>Lipid-anchor</topology>
    </subcellularLocation>
    <subcellularLocation>
        <location>Cytoplasm</location>
        <location>Cytosol</location>
    </subcellularLocation>
    <text>Associated with specialized secretory lysosomes called azurophil granules. At least half of this isoform is found in the cytoplasm, some of this fraction is myristoylated.</text>
</comment>
<comment type="subcellular location">
    <molecule>Isoform 2</molecule>
    <subcellularLocation>
        <location evidence="17">Cell membrane</location>
        <topology evidence="17">Lipid-anchor</topology>
    </subcellularLocation>
    <subcellularLocation>
        <location evidence="17">Membrane</location>
        <location evidence="17">Caveola</location>
        <topology evidence="17">Lipid-anchor</topology>
    </subcellularLocation>
    <subcellularLocation>
        <location evidence="17">Cell junction</location>
        <location evidence="17">Focal adhesion</location>
    </subcellularLocation>
    <subcellularLocation>
        <location evidence="17">Cytoplasm</location>
        <location evidence="17">Cytoskeleton</location>
    </subcellularLocation>
    <subcellularLocation>
        <location evidence="17">Golgi apparatus</location>
    </subcellularLocation>
    <subcellularLocation>
        <location evidence="17">Cytoplasmic vesicle</location>
    </subcellularLocation>
    <subcellularLocation>
        <location evidence="17">Lysosome</location>
    </subcellularLocation>
    <subcellularLocation>
        <location evidence="17">Nucleus</location>
    </subcellularLocation>
    <text>20% of this isoform is associated with caveolae. Localization at the cell membrane and at caveolae requires palmitoylation at Cys-3. Colocalizes with the actin cytoskeleton at focal adhesions.</text>
</comment>
<comment type="subcellular location">
    <subcellularLocation>
        <location>Cytoplasmic vesicle</location>
        <location>Secretory vesicle</location>
    </subcellularLocation>
    <subcellularLocation>
        <location>Cytoplasm</location>
        <location>Cytosol</location>
    </subcellularLocation>
</comment>
<comment type="alternative products">
    <event type="alternative splicing"/>
    <event type="alternative initiation"/>
    <isoform>
        <id>P08631-1</id>
        <name>1</name>
        <name>p60-HCK</name>
        <name>p61Hck</name>
        <sequence type="displayed"/>
    </isoform>
    <isoform>
        <id>P08631-2</id>
        <name>2</name>
        <name>p59-HCK</name>
        <name>p59Hck</name>
        <sequence type="described" ref="VSP_018858"/>
    </isoform>
    <isoform>
        <id>P08631-3</id>
        <name>3</name>
        <sequence type="described" ref="VSP_018858 VSP_041926"/>
    </isoform>
    <isoform>
        <id>P08631-4</id>
        <name>4</name>
        <sequence type="described" ref="VSP_041926"/>
    </isoform>
</comment>
<comment type="tissue specificity">
    <text evidence="40 44 46">Detected in monocytes and neutrophils (at protein level). Expressed predominantly in cells of the myeloid and B-lymphoid lineages. Highly expressed in granulocytes. Detected in tonsil.</text>
</comment>
<comment type="induction">
    <text evidence="11 46">Up-regulated during myeloid cell differentiation. The highest levels are detected in fully differentiated phagocytes. Up-regulated by IL2.</text>
</comment>
<comment type="domain">
    <text>The SH3 domain mediates binding to HIV-1 Nef.</text>
</comment>
<comment type="PTM">
    <text evidence="9 10 11 16 18 23 44 47 49">Phosphorylated on several tyrosine residues. Autophosphorylated. Becomes rapidly phosphorylated upon activation of the immunoglobulin receptors FCGR1A and FCGR2A. Phosphorylation by the BCR-ABL fusion protein mediates activation of HCK. Phosphorylation at Tyr-411 increases kinase activity. Phosphorylation at Tyr-522 inhibits kinase activity. Kinase activity is not required for phosphorylation at Tyr-522, suggesting that this site is a target of other kinases.</text>
</comment>
<comment type="PTM">
    <text evidence="16">Ubiquitinated by CBL, leading to its degradation via the proteasome.</text>
</comment>
<comment type="PTM">
    <text evidence="43">Isoform 2 palmitoylation at position 2 requires prior myristoylation. Palmitoylation at position 3 is required for caveolar localization of isoform 2.</text>
</comment>
<comment type="disease">
    <text>Aberrant activation of HCK by HIV-1 protein Nef enhances HIV-1 replication and contributes to HIV-1 pathogenicity.</text>
</comment>
<comment type="disease">
    <text>Aberrant activation of HCK, e.g. by the BCR-ABL fusion protein, promotes cancer cell proliferation.</text>
</comment>
<comment type="disease" evidence="41">
    <disease id="DI-06633">
        <name>Autoinflammation with pulmonary and cutaneous vasculitis</name>
        <acronym>AIPCV</acronym>
        <description>An autosomal dominant disorder characterized by cutaneous vasculitis and chronic pulmonary inflammation that evolves to fibrosis. AIPCV manifests soon after birth with petechial skin lesions, followed by progressive pulmonary involvement causing restrictive lung disease and respiratory insufficiency.</description>
        <dbReference type="MIM" id="620296"/>
    </disease>
    <text>The disease may be caused by variants affecting the gene represented in this entry.</text>
</comment>
<comment type="miscellaneous">
    <molecule>Isoform 1</molecule>
    <text>Initiates from a CTG codon.</text>
</comment>
<comment type="miscellaneous">
    <molecule>Isoform 4</molecule>
    <text evidence="54">Initiates from a CTG codon.</text>
</comment>
<comment type="similarity">
    <text evidence="3">Belongs to the protein kinase superfamily. Tyr protein kinase family. SRC subfamily.</text>
</comment>
<comment type="sequence caution" evidence="54">
    <conflict type="frameshift">
        <sequence resource="EMBL-CDS" id="AAA52643"/>
    </conflict>
</comment>
<comment type="sequence caution" evidence="54">
    <conflict type="erroneous initiation">
        <sequence resource="EMBL-CDS" id="BAF82585"/>
    </conflict>
    <text>Truncated N-terminus.</text>
</comment>
<sequence>MGGRSSCEDPGCPRDEERAPRMGCMKSKFLQVGGNTFSKTETSASPHCPVYVPDPTSTIKPGPNSHNSNTPGIREAGSEDIIVVALYDYEAIHHEDLSFQKGDQMVVLEESGEWWKARSLATRKEGYIPSNYVARVDSLETEEWFFKGISRKDAERQLLAPGNMLGSFMIRDSETTKGSYSLSVRDYDPRQGDTVKHYKIRTLDNGGFYISPRSTFSTLQELVDHYKKGNDGLCQKLSVPCMSSKPQKPWEKDAWEIPRESLKLEKKLGAGQFGEVWMATYNKHTKVAVKTMKPGSMSVEAFLAEANVMKTLQHDKLVKLHAVVTKEPIYIITEFMAKGSLLDFLKSDEGSKQPLPKLIDFSAQIAEGMAFIEQRNYIHRDLRAANILVSASLVCKIADFGLARVIEDNEYTAREGAKFPIKWTAPEAINFGSFTIKSDVWSFGILLMEIVTYGRIPYPGMSNPEVIRALERGYRMPRPENCPEELYNIMMRCWKNRPEERPTFEYIQSVLDDFYTATESQYQQQP</sequence>
<keyword id="KW-0002">3D-structure</keyword>
<keyword id="KW-0024">Alternative initiation</keyword>
<keyword id="KW-0025">Alternative splicing</keyword>
<keyword id="KW-0067">ATP-binding</keyword>
<keyword id="KW-0965">Cell junction</keyword>
<keyword id="KW-1003">Cell membrane</keyword>
<keyword id="KW-0966">Cell projection</keyword>
<keyword id="KW-0963">Cytoplasm</keyword>
<keyword id="KW-0968">Cytoplasmic vesicle</keyword>
<keyword id="KW-0206">Cytoskeleton</keyword>
<keyword id="KW-0268">Exocytosis</keyword>
<keyword id="KW-0333">Golgi apparatus</keyword>
<keyword id="KW-0945">Host-virus interaction</keyword>
<keyword id="KW-0391">Immunity</keyword>
<keyword id="KW-0395">Inflammatory response</keyword>
<keyword id="KW-0399">Innate immunity</keyword>
<keyword id="KW-0418">Kinase</keyword>
<keyword id="KW-0449">Lipoprotein</keyword>
<keyword id="KW-0458">Lysosome</keyword>
<keyword id="KW-0472">Membrane</keyword>
<keyword id="KW-0519">Myristate</keyword>
<keyword id="KW-0547">Nucleotide-binding</keyword>
<keyword id="KW-0539">Nucleus</keyword>
<keyword id="KW-0564">Palmitate</keyword>
<keyword id="KW-0581">Phagocytosis</keyword>
<keyword id="KW-0597">Phosphoprotein</keyword>
<keyword id="KW-1267">Proteomics identification</keyword>
<keyword id="KW-0656">Proto-oncogene</keyword>
<keyword id="KW-1185">Reference proteome</keyword>
<keyword id="KW-0727">SH2 domain</keyword>
<keyword id="KW-0728">SH3 domain</keyword>
<keyword id="KW-0808">Transferase</keyword>
<keyword id="KW-0829">Tyrosine-protein kinase</keyword>
<keyword id="KW-0832">Ubl conjugation</keyword>
<gene>
    <name type="primary">HCK</name>
</gene>
<evidence type="ECO:0000250" key="1"/>
<evidence type="ECO:0000250" key="2">
    <source>
        <dbReference type="UniProtKB" id="P08103"/>
    </source>
</evidence>
<evidence type="ECO:0000255" key="3">
    <source>
        <dbReference type="PROSITE-ProRule" id="PRU00159"/>
    </source>
</evidence>
<evidence type="ECO:0000255" key="4">
    <source>
        <dbReference type="PROSITE-ProRule" id="PRU00191"/>
    </source>
</evidence>
<evidence type="ECO:0000255" key="5">
    <source>
        <dbReference type="PROSITE-ProRule" id="PRU00192"/>
    </source>
</evidence>
<evidence type="ECO:0000255" key="6">
    <source>
        <dbReference type="PROSITE-ProRule" id="PRU10028"/>
    </source>
</evidence>
<evidence type="ECO:0000256" key="7">
    <source>
        <dbReference type="SAM" id="MobiDB-lite"/>
    </source>
</evidence>
<evidence type="ECO:0000269" key="8">
    <source>
    </source>
</evidence>
<evidence type="ECO:0000269" key="9">
    <source>
    </source>
</evidence>
<evidence type="ECO:0000269" key="10">
    <source>
    </source>
</evidence>
<evidence type="ECO:0000269" key="11">
    <source>
    </source>
</evidence>
<evidence type="ECO:0000269" key="12">
    <source>
    </source>
</evidence>
<evidence type="ECO:0000269" key="13">
    <source>
    </source>
</evidence>
<evidence type="ECO:0000269" key="14">
    <source>
    </source>
</evidence>
<evidence type="ECO:0000269" key="15">
    <source>
    </source>
</evidence>
<evidence type="ECO:0000269" key="16">
    <source>
    </source>
</evidence>
<evidence type="ECO:0000269" key="17">
    <source>
    </source>
</evidence>
<evidence type="ECO:0000269" key="18">
    <source>
    </source>
</evidence>
<evidence type="ECO:0000269" key="19">
    <source>
    </source>
</evidence>
<evidence type="ECO:0000269" key="20">
    <source>
    </source>
</evidence>
<evidence type="ECO:0000269" key="21">
    <source>
    </source>
</evidence>
<evidence type="ECO:0000269" key="22">
    <source>
    </source>
</evidence>
<evidence type="ECO:0000269" key="23">
    <source>
    </source>
</evidence>
<evidence type="ECO:0000269" key="24">
    <source>
    </source>
</evidence>
<evidence type="ECO:0000269" key="25">
    <source>
    </source>
</evidence>
<evidence type="ECO:0000269" key="26">
    <source>
    </source>
</evidence>
<evidence type="ECO:0000269" key="27">
    <source>
    </source>
</evidence>
<evidence type="ECO:0000269" key="28">
    <source>
    </source>
</evidence>
<evidence type="ECO:0000269" key="29">
    <source>
    </source>
</evidence>
<evidence type="ECO:0000269" key="30">
    <source>
    </source>
</evidence>
<evidence type="ECO:0000269" key="31">
    <source>
    </source>
</evidence>
<evidence type="ECO:0000269" key="32">
    <source>
    </source>
</evidence>
<evidence type="ECO:0000269" key="33">
    <source>
    </source>
</evidence>
<evidence type="ECO:0000269" key="34">
    <source>
    </source>
</evidence>
<evidence type="ECO:0000269" key="35">
    <source>
    </source>
</evidence>
<evidence type="ECO:0000269" key="36">
    <source>
    </source>
</evidence>
<evidence type="ECO:0000269" key="37">
    <source>
    </source>
</evidence>
<evidence type="ECO:0000269" key="38">
    <source>
    </source>
</evidence>
<evidence type="ECO:0000269" key="39">
    <source>
    </source>
</evidence>
<evidence type="ECO:0000269" key="40">
    <source>
    </source>
</evidence>
<evidence type="ECO:0000269" key="41">
    <source>
    </source>
</evidence>
<evidence type="ECO:0000269" key="42">
    <source>
    </source>
</evidence>
<evidence type="ECO:0000269" key="43">
    <source>
    </source>
</evidence>
<evidence type="ECO:0000269" key="44">
    <source>
    </source>
</evidence>
<evidence type="ECO:0000269" key="45">
    <source>
    </source>
</evidence>
<evidence type="ECO:0000269" key="46">
    <source>
    </source>
</evidence>
<evidence type="ECO:0000269" key="47">
    <source>
    </source>
</evidence>
<evidence type="ECO:0000269" key="48">
    <source>
    </source>
</evidence>
<evidence type="ECO:0000269" key="49">
    <source>
    </source>
</evidence>
<evidence type="ECO:0000269" key="50">
    <source>
    </source>
</evidence>
<evidence type="ECO:0000303" key="51">
    <source>
    </source>
</evidence>
<evidence type="ECO:0000303" key="52">
    <source>
    </source>
</evidence>
<evidence type="ECO:0000303" key="53">
    <source>
    </source>
</evidence>
<evidence type="ECO:0000305" key="54"/>
<evidence type="ECO:0007744" key="55">
    <source>
    </source>
</evidence>
<evidence type="ECO:0007744" key="56">
    <source>
    </source>
</evidence>
<evidence type="ECO:0007829" key="57">
    <source>
        <dbReference type="PDB" id="1AD5"/>
    </source>
</evidence>
<evidence type="ECO:0007829" key="58">
    <source>
        <dbReference type="PDB" id="1QCF"/>
    </source>
</evidence>
<evidence type="ECO:0007829" key="59">
    <source>
        <dbReference type="PDB" id="2HCK"/>
    </source>
</evidence>
<evidence type="ECO:0007829" key="60">
    <source>
        <dbReference type="PDB" id="2OI3"/>
    </source>
</evidence>
<evidence type="ECO:0007829" key="61">
    <source>
        <dbReference type="PDB" id="3VS2"/>
    </source>
</evidence>
<evidence type="ECO:0007829" key="62">
    <source>
        <dbReference type="PDB" id="3VS3"/>
    </source>
</evidence>
<evidence type="ECO:0007829" key="63">
    <source>
        <dbReference type="PDB" id="3VS6"/>
    </source>
</evidence>
<evidence type="ECO:0007829" key="64">
    <source>
        <dbReference type="PDB" id="4U5W"/>
    </source>
</evidence>
<evidence type="ECO:0007829" key="65">
    <source>
        <dbReference type="PDB" id="5H0B"/>
    </source>
</evidence>
<evidence type="ECO:0007829" key="66">
    <source>
        <dbReference type="PDB" id="5H0H"/>
    </source>
</evidence>
<evidence type="ECO:0007829" key="67">
    <source>
        <dbReference type="PDB" id="9BYJ"/>
    </source>
</evidence>
<name>HCK_HUMAN</name>
<protein>
    <recommendedName>
        <fullName>Tyrosine-protein kinase HCK</fullName>
        <ecNumber>2.7.10.2</ecNumber>
    </recommendedName>
    <alternativeName>
        <fullName>Hematopoietic cell kinase</fullName>
    </alternativeName>
    <alternativeName>
        <fullName>Hemopoietic cell kinase</fullName>
    </alternativeName>
    <alternativeName>
        <fullName>p59-HCK/p60-HCK</fullName>
    </alternativeName>
    <alternativeName>
        <fullName>p59Hck</fullName>
    </alternativeName>
    <alternativeName>
        <fullName>p61Hck</fullName>
    </alternativeName>
</protein>
<dbReference type="EC" id="2.7.10.2"/>
<dbReference type="EMBL" id="M16591">
    <property type="protein sequence ID" value="AAA52643.1"/>
    <property type="status" value="ALT_FRAME"/>
    <property type="molecule type" value="mRNA"/>
</dbReference>
<dbReference type="EMBL" id="M16592">
    <property type="protein sequence ID" value="AAA52644.1"/>
    <property type="molecule type" value="mRNA"/>
</dbReference>
<dbReference type="EMBL" id="AK026432">
    <property type="protein sequence ID" value="BAB15482.1"/>
    <property type="molecule type" value="mRNA"/>
</dbReference>
<dbReference type="EMBL" id="AK289896">
    <property type="protein sequence ID" value="BAF82585.1"/>
    <property type="status" value="ALT_INIT"/>
    <property type="molecule type" value="mRNA"/>
</dbReference>
<dbReference type="EMBL" id="AK298726">
    <property type="protein sequence ID" value="BAG60878.1"/>
    <property type="molecule type" value="mRNA"/>
</dbReference>
<dbReference type="EMBL" id="AL353092">
    <property type="protein sequence ID" value="CAI19694.1"/>
    <property type="molecule type" value="Genomic_DNA"/>
</dbReference>
<dbReference type="EMBL" id="AL049539">
    <property type="protein sequence ID" value="CAI19694.1"/>
    <property type="status" value="JOINED"/>
    <property type="molecule type" value="Genomic_DNA"/>
</dbReference>
<dbReference type="EMBL" id="AL353092">
    <property type="protein sequence ID" value="CAI19695.1"/>
    <property type="molecule type" value="Genomic_DNA"/>
</dbReference>
<dbReference type="EMBL" id="AL049539">
    <property type="protein sequence ID" value="CAI19695.1"/>
    <property type="status" value="JOINED"/>
    <property type="molecule type" value="Genomic_DNA"/>
</dbReference>
<dbReference type="EMBL" id="AL049539">
    <property type="protein sequence ID" value="CAI22966.1"/>
    <property type="molecule type" value="Genomic_DNA"/>
</dbReference>
<dbReference type="EMBL" id="AL353092">
    <property type="protein sequence ID" value="CAI22966.1"/>
    <property type="status" value="JOINED"/>
    <property type="molecule type" value="Genomic_DNA"/>
</dbReference>
<dbReference type="EMBL" id="AL049539">
    <property type="protein sequence ID" value="CAI22967.1"/>
    <property type="molecule type" value="Genomic_DNA"/>
</dbReference>
<dbReference type="EMBL" id="AL353092">
    <property type="protein sequence ID" value="CAI22967.1"/>
    <property type="status" value="JOINED"/>
    <property type="molecule type" value="Genomic_DNA"/>
</dbReference>
<dbReference type="EMBL" id="CH471077">
    <property type="protein sequence ID" value="EAW76392.1"/>
    <property type="molecule type" value="Genomic_DNA"/>
</dbReference>
<dbReference type="EMBL" id="CH471077">
    <property type="protein sequence ID" value="EAW76393.1"/>
    <property type="molecule type" value="Genomic_DNA"/>
</dbReference>
<dbReference type="EMBL" id="BC014435">
    <property type="protein sequence ID" value="AAH14435.2"/>
    <property type="molecule type" value="mRNA"/>
</dbReference>
<dbReference type="EMBL" id="BC094847">
    <property type="protein sequence ID" value="AAH94847.2"/>
    <property type="molecule type" value="mRNA"/>
</dbReference>
<dbReference type="EMBL" id="BC108930">
    <property type="protein sequence ID" value="AAI08931.2"/>
    <property type="molecule type" value="mRNA"/>
</dbReference>
<dbReference type="EMBL" id="BC108931">
    <property type="protein sequence ID" value="AAI08932.2"/>
    <property type="molecule type" value="mRNA"/>
</dbReference>
<dbReference type="EMBL" id="BC113854">
    <property type="protein sequence ID" value="AAI13855.2"/>
    <property type="molecule type" value="mRNA"/>
</dbReference>
<dbReference type="EMBL" id="BC114463">
    <property type="protein sequence ID" value="AAI14464.2"/>
    <property type="molecule type" value="mRNA"/>
</dbReference>
<dbReference type="EMBL" id="X58741">
    <property type="protein sequence ID" value="CAA41565.2"/>
    <property type="molecule type" value="Genomic_DNA"/>
</dbReference>
<dbReference type="EMBL" id="X58742">
    <property type="protein sequence ID" value="CAA41565.2"/>
    <property type="status" value="JOINED"/>
    <property type="molecule type" value="Genomic_DNA"/>
</dbReference>
<dbReference type="EMBL" id="X58743">
    <property type="protein sequence ID" value="CAA41565.2"/>
    <property type="status" value="JOINED"/>
    <property type="molecule type" value="Genomic_DNA"/>
</dbReference>
<dbReference type="CCDS" id="CCDS33460.1">
    <molecule id="P08631-1"/>
</dbReference>
<dbReference type="CCDS" id="CCDS54453.1">
    <molecule id="P08631-4"/>
</dbReference>
<dbReference type="CCDS" id="CCDS54455.1">
    <molecule id="P08631-2"/>
</dbReference>
<dbReference type="CCDS" id="CCDS54456.1">
    <molecule id="P08631-3"/>
</dbReference>
<dbReference type="PIR" id="A27811">
    <property type="entry name" value="TVHUHC"/>
</dbReference>
<dbReference type="PIR" id="A41263">
    <property type="entry name" value="A41263"/>
</dbReference>
<dbReference type="RefSeq" id="NP_001165600.1">
    <molecule id="P08631-2"/>
    <property type="nucleotide sequence ID" value="NM_001172129.3"/>
</dbReference>
<dbReference type="RefSeq" id="NP_001165601.1">
    <molecule id="P08631-4"/>
    <property type="nucleotide sequence ID" value="NM_001172130.3"/>
</dbReference>
<dbReference type="RefSeq" id="NP_001165602.1">
    <molecule id="P08631-3"/>
    <property type="nucleotide sequence ID" value="NM_001172131.3"/>
</dbReference>
<dbReference type="RefSeq" id="NP_001165604.1">
    <molecule id="P08631-2"/>
    <property type="nucleotide sequence ID" value="NM_001172133.3"/>
</dbReference>
<dbReference type="RefSeq" id="NP_002101.2">
    <molecule id="P08631-1"/>
    <property type="nucleotide sequence ID" value="NM_002110.3"/>
</dbReference>
<dbReference type="PDB" id="1AD5">
    <property type="method" value="X-ray"/>
    <property type="resolution" value="2.60 A"/>
    <property type="chains" value="A/B=79-526"/>
</dbReference>
<dbReference type="PDB" id="1BU1">
    <property type="method" value="X-ray"/>
    <property type="resolution" value="2.60 A"/>
    <property type="chains" value="A/B/C/D/E/F=81-137"/>
</dbReference>
<dbReference type="PDB" id="1QCF">
    <property type="method" value="X-ray"/>
    <property type="resolution" value="2.00 A"/>
    <property type="chains" value="A=81-526"/>
</dbReference>
<dbReference type="PDB" id="2C0I">
    <property type="method" value="X-ray"/>
    <property type="resolution" value="2.30 A"/>
    <property type="chains" value="A/B=81-526"/>
</dbReference>
<dbReference type="PDB" id="2C0O">
    <property type="method" value="X-ray"/>
    <property type="resolution" value="2.85 A"/>
    <property type="chains" value="A/B=81-526"/>
</dbReference>
<dbReference type="PDB" id="2C0T">
    <property type="method" value="X-ray"/>
    <property type="resolution" value="2.15 A"/>
    <property type="chains" value="A/B=81-526"/>
</dbReference>
<dbReference type="PDB" id="2HCK">
    <property type="method" value="X-ray"/>
    <property type="resolution" value="3.00 A"/>
    <property type="chains" value="A/B=79-526"/>
</dbReference>
<dbReference type="PDB" id="2HK5">
    <property type="method" value="X-ray"/>
    <property type="resolution" value="2.00 A"/>
    <property type="chains" value="A=247-514"/>
</dbReference>
<dbReference type="PDB" id="2OI3">
    <property type="method" value="NMR"/>
    <property type="chains" value="A=61-141"/>
</dbReference>
<dbReference type="PDB" id="2OJ2">
    <property type="method" value="NMR"/>
    <property type="chains" value="A=61-141"/>
</dbReference>
<dbReference type="PDB" id="3HCK">
    <property type="method" value="NMR"/>
    <property type="chains" value="A=140-245"/>
</dbReference>
<dbReference type="PDB" id="3NHN">
    <property type="method" value="X-ray"/>
    <property type="resolution" value="2.61 A"/>
    <property type="chains" value="A=72-256"/>
</dbReference>
<dbReference type="PDB" id="3RBB">
    <property type="method" value="X-ray"/>
    <property type="resolution" value="2.35 A"/>
    <property type="chains" value="B/D=79-138"/>
</dbReference>
<dbReference type="PDB" id="3REA">
    <property type="method" value="X-ray"/>
    <property type="resolution" value="2.00 A"/>
    <property type="chains" value="B/D=79-138"/>
</dbReference>
<dbReference type="PDB" id="3REB">
    <property type="method" value="X-ray"/>
    <property type="resolution" value="3.45 A"/>
    <property type="chains" value="B/D=79-138"/>
</dbReference>
<dbReference type="PDB" id="3VRY">
    <property type="method" value="X-ray"/>
    <property type="resolution" value="2.48 A"/>
    <property type="chains" value="A/B=81-526"/>
</dbReference>
<dbReference type="PDB" id="3VRZ">
    <property type="method" value="X-ray"/>
    <property type="resolution" value="2.22 A"/>
    <property type="chains" value="A/B=81-526"/>
</dbReference>
<dbReference type="PDB" id="3VS0">
    <property type="method" value="X-ray"/>
    <property type="resolution" value="2.93 A"/>
    <property type="chains" value="A/B=81-526"/>
</dbReference>
<dbReference type="PDB" id="3VS1">
    <property type="method" value="X-ray"/>
    <property type="resolution" value="2.46 A"/>
    <property type="chains" value="A/B=81-526"/>
</dbReference>
<dbReference type="PDB" id="3VS2">
    <property type="method" value="X-ray"/>
    <property type="resolution" value="2.61 A"/>
    <property type="chains" value="A/B=81-526"/>
</dbReference>
<dbReference type="PDB" id="3VS3">
    <property type="method" value="X-ray"/>
    <property type="resolution" value="2.17 A"/>
    <property type="chains" value="A/B=81-526"/>
</dbReference>
<dbReference type="PDB" id="3VS4">
    <property type="method" value="X-ray"/>
    <property type="resolution" value="2.75 A"/>
    <property type="chains" value="A/B=81-526"/>
</dbReference>
<dbReference type="PDB" id="3VS5">
    <property type="method" value="X-ray"/>
    <property type="resolution" value="2.85 A"/>
    <property type="chains" value="A/B=81-526"/>
</dbReference>
<dbReference type="PDB" id="3VS6">
    <property type="method" value="X-ray"/>
    <property type="resolution" value="2.37 A"/>
    <property type="chains" value="A/B=81-526"/>
</dbReference>
<dbReference type="PDB" id="3VS7">
    <property type="method" value="X-ray"/>
    <property type="resolution" value="3.00 A"/>
    <property type="chains" value="A/B=81-526"/>
</dbReference>
<dbReference type="PDB" id="4HCK">
    <property type="method" value="NMR"/>
    <property type="chains" value="A=72-143"/>
</dbReference>
<dbReference type="PDB" id="4LUD">
    <property type="method" value="X-ray"/>
    <property type="resolution" value="2.85 A"/>
    <property type="chains" value="A/B=81-526"/>
</dbReference>
<dbReference type="PDB" id="4LUE">
    <property type="method" value="X-ray"/>
    <property type="resolution" value="3.04 A"/>
    <property type="chains" value="A/B=81-526"/>
</dbReference>
<dbReference type="PDB" id="4ORZ">
    <property type="method" value="X-ray"/>
    <property type="resolution" value="2.00 A"/>
    <property type="chains" value="A=77-138"/>
</dbReference>
<dbReference type="PDB" id="4U5W">
    <property type="method" value="X-ray"/>
    <property type="resolution" value="1.86 A"/>
    <property type="chains" value="B/D=72-242"/>
</dbReference>
<dbReference type="PDB" id="5H09">
    <property type="method" value="X-ray"/>
    <property type="resolution" value="1.95 A"/>
    <property type="chains" value="A=81-526"/>
</dbReference>
<dbReference type="PDB" id="5H0B">
    <property type="method" value="X-ray"/>
    <property type="resolution" value="1.65 A"/>
    <property type="chains" value="A=81-526"/>
</dbReference>
<dbReference type="PDB" id="5H0E">
    <property type="method" value="X-ray"/>
    <property type="resolution" value="2.10 A"/>
    <property type="chains" value="A=81-526"/>
</dbReference>
<dbReference type="PDB" id="5H0G">
    <property type="method" value="X-ray"/>
    <property type="resolution" value="1.80 A"/>
    <property type="chains" value="A=81-526"/>
</dbReference>
<dbReference type="PDB" id="5H0H">
    <property type="method" value="X-ray"/>
    <property type="resolution" value="1.72 A"/>
    <property type="chains" value="A=81-526"/>
</dbReference>
<dbReference type="PDB" id="5HCK">
    <property type="method" value="NMR"/>
    <property type="chains" value="A=72-143"/>
</dbReference>
<dbReference type="PDB" id="5NUH">
    <property type="method" value="X-ray"/>
    <property type="resolution" value="2.78 A"/>
    <property type="chains" value="C/D=79-138"/>
</dbReference>
<dbReference type="PDB" id="5ZJ6">
    <property type="method" value="X-ray"/>
    <property type="resolution" value="1.70 A"/>
    <property type="chains" value="A/B=242-521"/>
</dbReference>
<dbReference type="PDB" id="8F2P">
    <property type="method" value="X-ray"/>
    <property type="resolution" value="2.63 A"/>
    <property type="chains" value="B=77-140"/>
</dbReference>
<dbReference type="PDB" id="9BYJ">
    <property type="method" value="X-ray"/>
    <property type="resolution" value="1.80 A"/>
    <property type="chains" value="A=81-526"/>
</dbReference>
<dbReference type="PDBsum" id="1AD5"/>
<dbReference type="PDBsum" id="1BU1"/>
<dbReference type="PDBsum" id="1QCF"/>
<dbReference type="PDBsum" id="2C0I"/>
<dbReference type="PDBsum" id="2C0O"/>
<dbReference type="PDBsum" id="2C0T"/>
<dbReference type="PDBsum" id="2HCK"/>
<dbReference type="PDBsum" id="2HK5"/>
<dbReference type="PDBsum" id="2OI3"/>
<dbReference type="PDBsum" id="2OJ2"/>
<dbReference type="PDBsum" id="3HCK"/>
<dbReference type="PDBsum" id="3NHN"/>
<dbReference type="PDBsum" id="3RBB"/>
<dbReference type="PDBsum" id="3REA"/>
<dbReference type="PDBsum" id="3REB"/>
<dbReference type="PDBsum" id="3VRY"/>
<dbReference type="PDBsum" id="3VRZ"/>
<dbReference type="PDBsum" id="3VS0"/>
<dbReference type="PDBsum" id="3VS1"/>
<dbReference type="PDBsum" id="3VS2"/>
<dbReference type="PDBsum" id="3VS3"/>
<dbReference type="PDBsum" id="3VS4"/>
<dbReference type="PDBsum" id="3VS5"/>
<dbReference type="PDBsum" id="3VS6"/>
<dbReference type="PDBsum" id="3VS7"/>
<dbReference type="PDBsum" id="4HCK"/>
<dbReference type="PDBsum" id="4LUD"/>
<dbReference type="PDBsum" id="4LUE"/>
<dbReference type="PDBsum" id="4ORZ"/>
<dbReference type="PDBsum" id="4U5W"/>
<dbReference type="PDBsum" id="5H09"/>
<dbReference type="PDBsum" id="5H0B"/>
<dbReference type="PDBsum" id="5H0E"/>
<dbReference type="PDBsum" id="5H0G"/>
<dbReference type="PDBsum" id="5H0H"/>
<dbReference type="PDBsum" id="5HCK"/>
<dbReference type="PDBsum" id="5NUH"/>
<dbReference type="PDBsum" id="5ZJ6"/>
<dbReference type="PDBsum" id="8F2P"/>
<dbReference type="PDBsum" id="9BYJ"/>
<dbReference type="BMRB" id="P08631"/>
<dbReference type="SMR" id="P08631"/>
<dbReference type="BioGRID" id="109305">
    <property type="interactions" value="166"/>
</dbReference>
<dbReference type="DIP" id="DIP-1051N"/>
<dbReference type="ELM" id="P08631"/>
<dbReference type="FunCoup" id="P08631">
    <property type="interactions" value="601"/>
</dbReference>
<dbReference type="IntAct" id="P08631">
    <property type="interactions" value="156"/>
</dbReference>
<dbReference type="MINT" id="P08631"/>
<dbReference type="STRING" id="9606.ENSP00000365012"/>
<dbReference type="BindingDB" id="P08631"/>
<dbReference type="ChEMBL" id="CHEMBL3234"/>
<dbReference type="DrugBank" id="DB01809">
    <property type="generic name" value="1-Ter-Butyl-3-P-Tolyl-1h-Pyrazolo[3,4-D]Pyrimidin-4-Ylamine"/>
</dbReference>
<dbReference type="DrugBank" id="DB06616">
    <property type="generic name" value="Bosutinib"/>
</dbReference>
<dbReference type="DrugBank" id="DB03044">
    <property type="generic name" value="Doramapimod"/>
</dbReference>
<dbReference type="DrugBank" id="DB12010">
    <property type="generic name" value="Fostamatinib"/>
</dbReference>
<dbReference type="DrugBank" id="DB01962">
    <property type="generic name" value="Phosphonotyrosine"/>
</dbReference>
<dbReference type="DrugBank" id="DB08052">
    <property type="generic name" value="PP-121"/>
</dbReference>
<dbReference type="DrugBank" id="DB04216">
    <property type="generic name" value="Quercetin"/>
</dbReference>
<dbReference type="DrugCentral" id="P08631"/>
<dbReference type="GuidetoPHARMACOLOGY" id="2032"/>
<dbReference type="GlyCosmos" id="P08631">
    <property type="glycosylation" value="2 sites, 1 glycan"/>
</dbReference>
<dbReference type="GlyGen" id="P08631">
    <property type="glycosylation" value="2 sites, 1 O-linked glycan (2 sites)"/>
</dbReference>
<dbReference type="iPTMnet" id="P08631"/>
<dbReference type="PhosphoSitePlus" id="P08631"/>
<dbReference type="SwissPalm" id="P08631"/>
<dbReference type="BioMuta" id="HCK"/>
<dbReference type="DMDM" id="20141296"/>
<dbReference type="jPOST" id="P08631"/>
<dbReference type="MassIVE" id="P08631"/>
<dbReference type="PaxDb" id="9606-ENSP00000444986"/>
<dbReference type="PeptideAtlas" id="P08631"/>
<dbReference type="ProteomicsDB" id="52142">
    <molecule id="P08631-1"/>
</dbReference>
<dbReference type="ProteomicsDB" id="52143">
    <molecule id="P08631-2"/>
</dbReference>
<dbReference type="ProteomicsDB" id="52144">
    <molecule id="P08631-3"/>
</dbReference>
<dbReference type="ProteomicsDB" id="52145">
    <molecule id="P08631-4"/>
</dbReference>
<dbReference type="ABCD" id="P08631">
    <property type="antibodies" value="6 sequenced antibodies"/>
</dbReference>
<dbReference type="Antibodypedia" id="3921">
    <property type="antibodies" value="600 antibodies from 38 providers"/>
</dbReference>
<dbReference type="DNASU" id="3055"/>
<dbReference type="Ensembl" id="ENST00000375852.5">
    <molecule id="P08631-1"/>
    <property type="protein sequence ID" value="ENSP00000365012.3"/>
    <property type="gene ID" value="ENSG00000101336.18"/>
</dbReference>
<dbReference type="Ensembl" id="ENST00000375862.7">
    <molecule id="P08631-4"/>
    <property type="protein sequence ID" value="ENSP00000365022.3"/>
    <property type="gene ID" value="ENSG00000101336.18"/>
</dbReference>
<dbReference type="Ensembl" id="ENST00000518730.5">
    <molecule id="P08631-3"/>
    <property type="protein sequence ID" value="ENSP00000427757.1"/>
    <property type="gene ID" value="ENSG00000101336.18"/>
</dbReference>
<dbReference type="Ensembl" id="ENST00000520553.5">
    <molecule id="P08631-2"/>
    <property type="protein sequence ID" value="ENSP00000429848.1"/>
    <property type="gene ID" value="ENSG00000101336.18"/>
</dbReference>
<dbReference type="Ensembl" id="ENST00000629881.2">
    <molecule id="P08631-2"/>
    <property type="protein sequence ID" value="ENSP00000486627.1"/>
    <property type="gene ID" value="ENSG00000101336.18"/>
</dbReference>
<dbReference type="GeneID" id="3055"/>
<dbReference type="KEGG" id="hsa:3055"/>
<dbReference type="MANE-Select" id="ENST00000375852.5">
    <property type="protein sequence ID" value="ENSP00000365012.3"/>
    <property type="RefSeq nucleotide sequence ID" value="NM_002110.5"/>
    <property type="RefSeq protein sequence ID" value="NP_002101.2"/>
</dbReference>
<dbReference type="UCSC" id="uc002wxi.4">
    <molecule id="P08631-1"/>
    <property type="organism name" value="human"/>
</dbReference>
<dbReference type="AGR" id="HGNC:4840"/>
<dbReference type="CTD" id="3055"/>
<dbReference type="DisGeNET" id="3055"/>
<dbReference type="GeneCards" id="HCK"/>
<dbReference type="HGNC" id="HGNC:4840">
    <property type="gene designation" value="HCK"/>
</dbReference>
<dbReference type="HPA" id="ENSG00000101336">
    <property type="expression patterns" value="Tissue enhanced (lymphoid)"/>
</dbReference>
<dbReference type="MalaCards" id="HCK"/>
<dbReference type="MIM" id="142370">
    <property type="type" value="gene"/>
</dbReference>
<dbReference type="MIM" id="620296">
    <property type="type" value="phenotype"/>
</dbReference>
<dbReference type="neXtProt" id="NX_P08631"/>
<dbReference type="OpenTargets" id="ENSG00000101336"/>
<dbReference type="PharmGKB" id="PA29216"/>
<dbReference type="VEuPathDB" id="HostDB:ENSG00000101336"/>
<dbReference type="eggNOG" id="KOG0197">
    <property type="taxonomic scope" value="Eukaryota"/>
</dbReference>
<dbReference type="GeneTree" id="ENSGT00940000158738"/>
<dbReference type="HOGENOM" id="CLU_000288_7_2_1"/>
<dbReference type="InParanoid" id="P08631"/>
<dbReference type="OMA" id="CPRDQER"/>
<dbReference type="OrthoDB" id="4062651at2759"/>
<dbReference type="PAN-GO" id="P08631">
    <property type="GO annotations" value="6 GO annotations based on evolutionary models"/>
</dbReference>
<dbReference type="PhylomeDB" id="P08631"/>
<dbReference type="BRENDA" id="2.7.10.2">
    <property type="organism ID" value="2681"/>
</dbReference>
<dbReference type="PathwayCommons" id="P08631"/>
<dbReference type="Reactome" id="R-HSA-164944">
    <property type="pathway name" value="Nef and signal transduction"/>
</dbReference>
<dbReference type="Reactome" id="R-HSA-2029481">
    <property type="pathway name" value="FCGR activation"/>
</dbReference>
<dbReference type="Reactome" id="R-HSA-912631">
    <property type="pathway name" value="Regulation of signaling by CBL"/>
</dbReference>
<dbReference type="Reactome" id="R-HSA-9664323">
    <property type="pathway name" value="FCGR3A-mediated IL10 synthesis"/>
</dbReference>
<dbReference type="Reactome" id="R-HSA-9664422">
    <property type="pathway name" value="FCGR3A-mediated phagocytosis"/>
</dbReference>
<dbReference type="Reactome" id="R-HSA-9674555">
    <property type="pathway name" value="Signaling by CSF3 (G-CSF)"/>
</dbReference>
<dbReference type="Reactome" id="R-HSA-9680350">
    <property type="pathway name" value="Signaling by CSF1 (M-CSF) in myeloid cells"/>
</dbReference>
<dbReference type="Reactome" id="R-HSA-9705462">
    <property type="pathway name" value="Inactivation of CSF3 (G-CSF) signaling"/>
</dbReference>
<dbReference type="Reactome" id="R-HSA-9706374">
    <property type="pathway name" value="FLT3 signaling through SRC family kinases"/>
</dbReference>
<dbReference type="SignaLink" id="P08631"/>
<dbReference type="SIGNOR" id="P08631"/>
<dbReference type="BioGRID-ORCS" id="3055">
    <property type="hits" value="13 hits in 1180 CRISPR screens"/>
</dbReference>
<dbReference type="CD-CODE" id="FB4E32DD">
    <property type="entry name" value="Presynaptic clusters and postsynaptic densities"/>
</dbReference>
<dbReference type="ChiTaRS" id="HCK">
    <property type="organism name" value="human"/>
</dbReference>
<dbReference type="EvolutionaryTrace" id="P08631"/>
<dbReference type="GeneWiki" id="HCK"/>
<dbReference type="GenomeRNAi" id="3055"/>
<dbReference type="Pharos" id="P08631">
    <property type="development level" value="Tclin"/>
</dbReference>
<dbReference type="PRO" id="PR:P08631"/>
<dbReference type="Proteomes" id="UP000005640">
    <property type="component" value="Chromosome 20"/>
</dbReference>
<dbReference type="RNAct" id="P08631">
    <property type="molecule type" value="protein"/>
</dbReference>
<dbReference type="Bgee" id="ENSG00000101336">
    <property type="expression patterns" value="Expressed in monocyte and 177 other cell types or tissues"/>
</dbReference>
<dbReference type="ExpressionAtlas" id="P08631">
    <property type="expression patterns" value="baseline and differential"/>
</dbReference>
<dbReference type="GO" id="GO:0005901">
    <property type="term" value="C:caveola"/>
    <property type="evidence" value="ECO:0000314"/>
    <property type="project" value="UniProtKB"/>
</dbReference>
<dbReference type="GO" id="GO:0042995">
    <property type="term" value="C:cell projection"/>
    <property type="evidence" value="ECO:0007669"/>
    <property type="project" value="UniProtKB-SubCell"/>
</dbReference>
<dbReference type="GO" id="GO:0009898">
    <property type="term" value="C:cytoplasmic side of plasma membrane"/>
    <property type="evidence" value="ECO:0000315"/>
    <property type="project" value="UniProtKB"/>
</dbReference>
<dbReference type="GO" id="GO:0005856">
    <property type="term" value="C:cytoskeleton"/>
    <property type="evidence" value="ECO:0007669"/>
    <property type="project" value="UniProtKB-SubCell"/>
</dbReference>
<dbReference type="GO" id="GO:0005829">
    <property type="term" value="C:cytosol"/>
    <property type="evidence" value="ECO:0000314"/>
    <property type="project" value="HPA"/>
</dbReference>
<dbReference type="GO" id="GO:0005925">
    <property type="term" value="C:focal adhesion"/>
    <property type="evidence" value="ECO:0000315"/>
    <property type="project" value="UniProtKB"/>
</dbReference>
<dbReference type="GO" id="GO:0005794">
    <property type="term" value="C:Golgi apparatus"/>
    <property type="evidence" value="ECO:0007669"/>
    <property type="project" value="UniProtKB-SubCell"/>
</dbReference>
<dbReference type="GO" id="GO:0043231">
    <property type="term" value="C:intracellular membrane-bounded organelle"/>
    <property type="evidence" value="ECO:0000314"/>
    <property type="project" value="HPA"/>
</dbReference>
<dbReference type="GO" id="GO:0005764">
    <property type="term" value="C:lysosome"/>
    <property type="evidence" value="ECO:0000314"/>
    <property type="project" value="UniProtKB"/>
</dbReference>
<dbReference type="GO" id="GO:0005634">
    <property type="term" value="C:nucleus"/>
    <property type="evidence" value="ECO:0007669"/>
    <property type="project" value="UniProtKB-SubCell"/>
</dbReference>
<dbReference type="GO" id="GO:0005886">
    <property type="term" value="C:plasma membrane"/>
    <property type="evidence" value="ECO:0000314"/>
    <property type="project" value="HPA"/>
</dbReference>
<dbReference type="GO" id="GO:0030133">
    <property type="term" value="C:transport vesicle"/>
    <property type="evidence" value="ECO:0007669"/>
    <property type="project" value="UniProtKB-SubCell"/>
</dbReference>
<dbReference type="GO" id="GO:0005524">
    <property type="term" value="F:ATP binding"/>
    <property type="evidence" value="ECO:0007669"/>
    <property type="project" value="UniProtKB-KW"/>
</dbReference>
<dbReference type="GO" id="GO:0008289">
    <property type="term" value="F:lipid binding"/>
    <property type="evidence" value="ECO:0000269"/>
    <property type="project" value="DisProt"/>
</dbReference>
<dbReference type="GO" id="GO:0004715">
    <property type="term" value="F:non-membrane spanning protein tyrosine kinase activity"/>
    <property type="evidence" value="ECO:0000318"/>
    <property type="project" value="GO_Central"/>
</dbReference>
<dbReference type="GO" id="GO:0001784">
    <property type="term" value="F:phosphotyrosine residue binding"/>
    <property type="evidence" value="ECO:0000353"/>
    <property type="project" value="CAFA"/>
</dbReference>
<dbReference type="GO" id="GO:0004713">
    <property type="term" value="F:protein tyrosine kinase activity"/>
    <property type="evidence" value="ECO:0000315"/>
    <property type="project" value="UniProtKB"/>
</dbReference>
<dbReference type="GO" id="GO:0005102">
    <property type="term" value="F:signaling receptor binding"/>
    <property type="evidence" value="ECO:0000318"/>
    <property type="project" value="GO_Central"/>
</dbReference>
<dbReference type="GO" id="GO:0007155">
    <property type="term" value="P:cell adhesion"/>
    <property type="evidence" value="ECO:0000304"/>
    <property type="project" value="UniProtKB"/>
</dbReference>
<dbReference type="GO" id="GO:0030154">
    <property type="term" value="P:cell differentiation"/>
    <property type="evidence" value="ECO:0000318"/>
    <property type="project" value="GO_Central"/>
</dbReference>
<dbReference type="GO" id="GO:0007169">
    <property type="term" value="P:cell surface receptor protein tyrosine kinase signaling pathway"/>
    <property type="evidence" value="ECO:0000318"/>
    <property type="project" value="GO_Central"/>
</dbReference>
<dbReference type="GO" id="GO:0019221">
    <property type="term" value="P:cytokine-mediated signaling pathway"/>
    <property type="evidence" value="ECO:0000304"/>
    <property type="project" value="UniProtKB"/>
</dbReference>
<dbReference type="GO" id="GO:0050830">
    <property type="term" value="P:defense response to Gram-positive bacterium"/>
    <property type="evidence" value="ECO:0007669"/>
    <property type="project" value="Ensembl"/>
</dbReference>
<dbReference type="GO" id="GO:0038096">
    <property type="term" value="P:Fc-gamma receptor signaling pathway involved in phagocytosis"/>
    <property type="evidence" value="ECO:0000304"/>
    <property type="project" value="Reactome"/>
</dbReference>
<dbReference type="GO" id="GO:0006954">
    <property type="term" value="P:inflammatory response"/>
    <property type="evidence" value="ECO:0007669"/>
    <property type="project" value="UniProtKB-KW"/>
</dbReference>
<dbReference type="GO" id="GO:0002758">
    <property type="term" value="P:innate immune response-activating signaling pathway"/>
    <property type="evidence" value="ECO:0000304"/>
    <property type="project" value="UniProtKB"/>
</dbReference>
<dbReference type="GO" id="GO:0007229">
    <property type="term" value="P:integrin-mediated signaling pathway"/>
    <property type="evidence" value="ECO:0000304"/>
    <property type="project" value="UniProtKB"/>
</dbReference>
<dbReference type="GO" id="GO:0035556">
    <property type="term" value="P:intracellular signal transduction"/>
    <property type="evidence" value="ECO:0000315"/>
    <property type="project" value="UniProtKB"/>
</dbReference>
<dbReference type="GO" id="GO:0043299">
    <property type="term" value="P:leukocyte degranulation"/>
    <property type="evidence" value="ECO:0000304"/>
    <property type="project" value="UniProtKB"/>
</dbReference>
<dbReference type="GO" id="GO:0002522">
    <property type="term" value="P:leukocyte migration involved in immune response"/>
    <property type="evidence" value="ECO:0000304"/>
    <property type="project" value="UniProtKB"/>
</dbReference>
<dbReference type="GO" id="GO:0031663">
    <property type="term" value="P:lipopolysaccharide-mediated signaling pathway"/>
    <property type="evidence" value="ECO:0000304"/>
    <property type="project" value="UniProtKB"/>
</dbReference>
<dbReference type="GO" id="GO:0007498">
    <property type="term" value="P:mesoderm development"/>
    <property type="evidence" value="ECO:0000304"/>
    <property type="project" value="ProtInc"/>
</dbReference>
<dbReference type="GO" id="GO:0043066">
    <property type="term" value="P:negative regulation of apoptotic process"/>
    <property type="evidence" value="ECO:0000315"/>
    <property type="project" value="UniProtKB"/>
</dbReference>
<dbReference type="GO" id="GO:0002862">
    <property type="term" value="P:negative regulation of inflammatory response to antigenic stimulus"/>
    <property type="evidence" value="ECO:0000304"/>
    <property type="project" value="Reactome"/>
</dbReference>
<dbReference type="GO" id="GO:0018108">
    <property type="term" value="P:peptidyl-tyrosine phosphorylation"/>
    <property type="evidence" value="ECO:0000315"/>
    <property type="project" value="UniProtKB"/>
</dbReference>
<dbReference type="GO" id="GO:0030838">
    <property type="term" value="P:positive regulation of actin filament polymerization"/>
    <property type="evidence" value="ECO:0000304"/>
    <property type="project" value="UniProtKB"/>
</dbReference>
<dbReference type="GO" id="GO:0008284">
    <property type="term" value="P:positive regulation of cell population proliferation"/>
    <property type="evidence" value="ECO:0000315"/>
    <property type="project" value="UniProtKB"/>
</dbReference>
<dbReference type="GO" id="GO:0046777">
    <property type="term" value="P:protein autophosphorylation"/>
    <property type="evidence" value="ECO:0000315"/>
    <property type="project" value="UniProtKB"/>
</dbReference>
<dbReference type="GO" id="GO:0006468">
    <property type="term" value="P:protein phosphorylation"/>
    <property type="evidence" value="ECO:0000304"/>
    <property type="project" value="ProtInc"/>
</dbReference>
<dbReference type="GO" id="GO:0032956">
    <property type="term" value="P:regulation of actin cytoskeleton organization"/>
    <property type="evidence" value="ECO:0000315"/>
    <property type="project" value="UniProtKB"/>
</dbReference>
<dbReference type="GO" id="GO:0008360">
    <property type="term" value="P:regulation of cell shape"/>
    <property type="evidence" value="ECO:0000315"/>
    <property type="project" value="UniProtKB"/>
</dbReference>
<dbReference type="GO" id="GO:0051090">
    <property type="term" value="P:regulation of DNA-binding transcription factor activity"/>
    <property type="evidence" value="ECO:0000315"/>
    <property type="project" value="UniProtKB"/>
</dbReference>
<dbReference type="GO" id="GO:0050727">
    <property type="term" value="P:regulation of inflammatory response"/>
    <property type="evidence" value="ECO:0000304"/>
    <property type="project" value="UniProtKB"/>
</dbReference>
<dbReference type="GO" id="GO:0050764">
    <property type="term" value="P:regulation of phagocytosis"/>
    <property type="evidence" value="ECO:0000315"/>
    <property type="project" value="UniProtKB"/>
</dbReference>
<dbReference type="GO" id="GO:0071801">
    <property type="term" value="P:regulation of podosome assembly"/>
    <property type="evidence" value="ECO:0000314"/>
    <property type="project" value="UniProtKB"/>
</dbReference>
<dbReference type="GO" id="GO:0045728">
    <property type="term" value="P:respiratory burst after phagocytosis"/>
    <property type="evidence" value="ECO:0000304"/>
    <property type="project" value="UniProtKB"/>
</dbReference>
<dbReference type="GO" id="GO:0060333">
    <property type="term" value="P:type II interferon-mediated signaling pathway"/>
    <property type="evidence" value="ECO:0000304"/>
    <property type="project" value="UniProtKB"/>
</dbReference>
<dbReference type="CDD" id="cd10363">
    <property type="entry name" value="SH2_Src_HCK"/>
    <property type="match status" value="1"/>
</dbReference>
<dbReference type="DisProt" id="DP02383"/>
<dbReference type="FunFam" id="1.10.510.10:FF:000553">
    <property type="entry name" value="Tyrosine-protein kinase"/>
    <property type="match status" value="1"/>
</dbReference>
<dbReference type="FunFam" id="2.30.30.40:FF:000095">
    <property type="entry name" value="Tyrosine-protein kinase"/>
    <property type="match status" value="1"/>
</dbReference>
<dbReference type="FunFam" id="3.30.200.20:FF:000036">
    <property type="entry name" value="Tyrosine-protein kinase"/>
    <property type="match status" value="1"/>
</dbReference>
<dbReference type="FunFam" id="3.30.505.10:FF:000010">
    <property type="entry name" value="Tyrosine-protein kinase"/>
    <property type="match status" value="1"/>
</dbReference>
<dbReference type="Gene3D" id="3.30.200.20">
    <property type="entry name" value="Phosphorylase Kinase, domain 1"/>
    <property type="match status" value="1"/>
</dbReference>
<dbReference type="Gene3D" id="3.30.505.10">
    <property type="entry name" value="SH2 domain"/>
    <property type="match status" value="1"/>
</dbReference>
<dbReference type="Gene3D" id="2.30.30.40">
    <property type="entry name" value="SH3 Domains"/>
    <property type="match status" value="1"/>
</dbReference>
<dbReference type="Gene3D" id="1.10.510.10">
    <property type="entry name" value="Transferase(Phosphotransferase) domain 1"/>
    <property type="match status" value="1"/>
</dbReference>
<dbReference type="InterPro" id="IPR035851">
    <property type="entry name" value="HCK_SH2"/>
</dbReference>
<dbReference type="InterPro" id="IPR011009">
    <property type="entry name" value="Kinase-like_dom_sf"/>
</dbReference>
<dbReference type="InterPro" id="IPR050198">
    <property type="entry name" value="Non-receptor_tyrosine_kinases"/>
</dbReference>
<dbReference type="InterPro" id="IPR000719">
    <property type="entry name" value="Prot_kinase_dom"/>
</dbReference>
<dbReference type="InterPro" id="IPR017441">
    <property type="entry name" value="Protein_kinase_ATP_BS"/>
</dbReference>
<dbReference type="InterPro" id="IPR001245">
    <property type="entry name" value="Ser-Thr/Tyr_kinase_cat_dom"/>
</dbReference>
<dbReference type="InterPro" id="IPR000980">
    <property type="entry name" value="SH2"/>
</dbReference>
<dbReference type="InterPro" id="IPR036860">
    <property type="entry name" value="SH2_dom_sf"/>
</dbReference>
<dbReference type="InterPro" id="IPR036028">
    <property type="entry name" value="SH3-like_dom_sf"/>
</dbReference>
<dbReference type="InterPro" id="IPR001452">
    <property type="entry name" value="SH3_domain"/>
</dbReference>
<dbReference type="InterPro" id="IPR008266">
    <property type="entry name" value="Tyr_kinase_AS"/>
</dbReference>
<dbReference type="InterPro" id="IPR020635">
    <property type="entry name" value="Tyr_kinase_cat_dom"/>
</dbReference>
<dbReference type="PANTHER" id="PTHR24418">
    <property type="entry name" value="TYROSINE-PROTEIN KINASE"/>
    <property type="match status" value="1"/>
</dbReference>
<dbReference type="Pfam" id="PF07714">
    <property type="entry name" value="PK_Tyr_Ser-Thr"/>
    <property type="match status" value="1"/>
</dbReference>
<dbReference type="Pfam" id="PF00017">
    <property type="entry name" value="SH2"/>
    <property type="match status" value="1"/>
</dbReference>
<dbReference type="Pfam" id="PF00018">
    <property type="entry name" value="SH3_1"/>
    <property type="match status" value="1"/>
</dbReference>
<dbReference type="PRINTS" id="PR00401">
    <property type="entry name" value="SH2DOMAIN"/>
</dbReference>
<dbReference type="PRINTS" id="PR00452">
    <property type="entry name" value="SH3DOMAIN"/>
</dbReference>
<dbReference type="PRINTS" id="PR00109">
    <property type="entry name" value="TYRKINASE"/>
</dbReference>
<dbReference type="SMART" id="SM00252">
    <property type="entry name" value="SH2"/>
    <property type="match status" value="1"/>
</dbReference>
<dbReference type="SMART" id="SM00326">
    <property type="entry name" value="SH3"/>
    <property type="match status" value="1"/>
</dbReference>
<dbReference type="SMART" id="SM00219">
    <property type="entry name" value="TyrKc"/>
    <property type="match status" value="1"/>
</dbReference>
<dbReference type="SUPFAM" id="SSF56112">
    <property type="entry name" value="Protein kinase-like (PK-like)"/>
    <property type="match status" value="1"/>
</dbReference>
<dbReference type="SUPFAM" id="SSF55550">
    <property type="entry name" value="SH2 domain"/>
    <property type="match status" value="1"/>
</dbReference>
<dbReference type="SUPFAM" id="SSF50044">
    <property type="entry name" value="SH3-domain"/>
    <property type="match status" value="1"/>
</dbReference>
<dbReference type="PROSITE" id="PS00107">
    <property type="entry name" value="PROTEIN_KINASE_ATP"/>
    <property type="match status" value="1"/>
</dbReference>
<dbReference type="PROSITE" id="PS50011">
    <property type="entry name" value="PROTEIN_KINASE_DOM"/>
    <property type="match status" value="1"/>
</dbReference>
<dbReference type="PROSITE" id="PS00109">
    <property type="entry name" value="PROTEIN_KINASE_TYR"/>
    <property type="match status" value="1"/>
</dbReference>
<dbReference type="PROSITE" id="PS50001">
    <property type="entry name" value="SH2"/>
    <property type="match status" value="1"/>
</dbReference>
<dbReference type="PROSITE" id="PS50002">
    <property type="entry name" value="SH3"/>
    <property type="match status" value="1"/>
</dbReference>
<proteinExistence type="evidence at protein level"/>